<name>AP2B1_HUMAN</name>
<reference key="1">
    <citation type="journal article" date="1990" name="J. Biol. Chem.">
        <title>Conservation and diversity in families of coated vesicle adaptins.</title>
        <authorList>
            <person name="Ponnambalam S."/>
            <person name="Robinson M.S."/>
            <person name="Jackson A.P."/>
            <person name="Peiperl L."/>
            <person name="Parham P."/>
        </authorList>
    </citation>
    <scope>NUCLEOTIDE SEQUENCE [MRNA] (ISOFORM 1)</scope>
    <source>
        <tissue>Brain</tissue>
    </source>
</reference>
<reference key="2">
    <citation type="journal article" date="2005" name="Asian J. Androl.">
        <title>Expression of a novel beta adaptin subunit mRNA splice variant in human testes.</title>
        <authorList>
            <person name="Zhang X.D."/>
            <person name="Yin L.L."/>
            <person name="Zheng Y."/>
            <person name="Lu L."/>
            <person name="Zhou Z.M."/>
            <person name="Sha J.H."/>
        </authorList>
    </citation>
    <scope>NUCLEOTIDE SEQUENCE [MRNA] (ISOFORM 3)</scope>
    <scope>ALTERNATIVE SPLICING</scope>
    <source>
        <tissue>Testis</tissue>
    </source>
</reference>
<reference key="3">
    <citation type="journal article" date="2006" name="Nature">
        <title>DNA sequence of human chromosome 17 and analysis of rearrangement in the human lineage.</title>
        <authorList>
            <person name="Zody M.C."/>
            <person name="Garber M."/>
            <person name="Adams D.J."/>
            <person name="Sharpe T."/>
            <person name="Harrow J."/>
            <person name="Lupski J.R."/>
            <person name="Nicholson C."/>
            <person name="Searle S.M."/>
            <person name="Wilming L."/>
            <person name="Young S.K."/>
            <person name="Abouelleil A."/>
            <person name="Allen N.R."/>
            <person name="Bi W."/>
            <person name="Bloom T."/>
            <person name="Borowsky M.L."/>
            <person name="Bugalter B.E."/>
            <person name="Butler J."/>
            <person name="Chang J.L."/>
            <person name="Chen C.-K."/>
            <person name="Cook A."/>
            <person name="Corum B."/>
            <person name="Cuomo C.A."/>
            <person name="de Jong P.J."/>
            <person name="DeCaprio D."/>
            <person name="Dewar K."/>
            <person name="FitzGerald M."/>
            <person name="Gilbert J."/>
            <person name="Gibson R."/>
            <person name="Gnerre S."/>
            <person name="Goldstein S."/>
            <person name="Grafham D.V."/>
            <person name="Grocock R."/>
            <person name="Hafez N."/>
            <person name="Hagopian D.S."/>
            <person name="Hart E."/>
            <person name="Norman C.H."/>
            <person name="Humphray S."/>
            <person name="Jaffe D.B."/>
            <person name="Jones M."/>
            <person name="Kamal M."/>
            <person name="Khodiyar V.K."/>
            <person name="LaButti K."/>
            <person name="Laird G."/>
            <person name="Lehoczky J."/>
            <person name="Liu X."/>
            <person name="Lokyitsang T."/>
            <person name="Loveland J."/>
            <person name="Lui A."/>
            <person name="Macdonald P."/>
            <person name="Major J.E."/>
            <person name="Matthews L."/>
            <person name="Mauceli E."/>
            <person name="McCarroll S.A."/>
            <person name="Mihalev A.H."/>
            <person name="Mudge J."/>
            <person name="Nguyen C."/>
            <person name="Nicol R."/>
            <person name="O'Leary S.B."/>
            <person name="Osoegawa K."/>
            <person name="Schwartz D.C."/>
            <person name="Shaw-Smith C."/>
            <person name="Stankiewicz P."/>
            <person name="Steward C."/>
            <person name="Swarbreck D."/>
            <person name="Venkataraman V."/>
            <person name="Whittaker C.A."/>
            <person name="Yang X."/>
            <person name="Zimmer A.R."/>
            <person name="Bradley A."/>
            <person name="Hubbard T."/>
            <person name="Birren B.W."/>
            <person name="Rogers J."/>
            <person name="Lander E.S."/>
            <person name="Nusbaum C."/>
        </authorList>
    </citation>
    <scope>NUCLEOTIDE SEQUENCE [LARGE SCALE GENOMIC DNA]</scope>
</reference>
<reference key="4">
    <citation type="submission" date="2005-09" db="EMBL/GenBank/DDBJ databases">
        <authorList>
            <person name="Mural R.J."/>
            <person name="Istrail S."/>
            <person name="Sutton G.G."/>
            <person name="Florea L."/>
            <person name="Halpern A.L."/>
            <person name="Mobarry C.M."/>
            <person name="Lippert R."/>
            <person name="Walenz B."/>
            <person name="Shatkay H."/>
            <person name="Dew I."/>
            <person name="Miller J.R."/>
            <person name="Flanigan M.J."/>
            <person name="Edwards N.J."/>
            <person name="Bolanos R."/>
            <person name="Fasulo D."/>
            <person name="Halldorsson B.V."/>
            <person name="Hannenhalli S."/>
            <person name="Turner R."/>
            <person name="Yooseph S."/>
            <person name="Lu F."/>
            <person name="Nusskern D.R."/>
            <person name="Shue B.C."/>
            <person name="Zheng X.H."/>
            <person name="Zhong F."/>
            <person name="Delcher A.L."/>
            <person name="Huson D.H."/>
            <person name="Kravitz S.A."/>
            <person name="Mouchard L."/>
            <person name="Reinert K."/>
            <person name="Remington K.A."/>
            <person name="Clark A.G."/>
            <person name="Waterman M.S."/>
            <person name="Eichler E.E."/>
            <person name="Adams M.D."/>
            <person name="Hunkapiller M.W."/>
            <person name="Myers E.W."/>
            <person name="Venter J.C."/>
        </authorList>
    </citation>
    <scope>NUCLEOTIDE SEQUENCE [LARGE SCALE GENOMIC DNA]</scope>
</reference>
<reference key="5">
    <citation type="journal article" date="2004" name="Genome Res.">
        <title>The status, quality, and expansion of the NIH full-length cDNA project: the Mammalian Gene Collection (MGC).</title>
        <authorList>
            <consortium name="The MGC Project Team"/>
        </authorList>
    </citation>
    <scope>NUCLEOTIDE SEQUENCE [LARGE SCALE MRNA] (ISOFORM 2)</scope>
    <source>
        <tissue>Muscle</tissue>
    </source>
</reference>
<reference key="6">
    <citation type="journal article" date="2002" name="J. Biol. Chem.">
        <title>beta-Arrestin/AP-2 interaction in G protein-coupled receptor internalization: identification of a beta-arrestin binding site in beta 2-adaptin.</title>
        <authorList>
            <person name="Laporte S.A."/>
            <person name="Miller W.E."/>
            <person name="Kim K.-M."/>
            <person name="Caron M.G."/>
        </authorList>
    </citation>
    <scope>INTERACTION WITH ARRB1</scope>
    <scope>MUTAGENESIS OF GLU-849 AND GLU-902</scope>
</reference>
<reference key="7">
    <citation type="journal article" date="2002" name="Mol. Biol. Cell">
        <title>Transforming growth factor-beta receptors interact with AP2 by direct binding to beta2 subunit.</title>
        <authorList>
            <person name="Yao D."/>
            <person name="Ehrlich M."/>
            <person name="Henis Y.I."/>
            <person name="Leof E.B."/>
        </authorList>
    </citation>
    <scope>INTERACTION WITH TGFBR1 AND TGFBR2</scope>
</reference>
<reference key="8">
    <citation type="journal article" date="2003" name="Cell Struct. Funct.">
        <title>Adaptor protein complexes as the key regulators of protein sorting in the post-Golgi network.</title>
        <authorList>
            <person name="Nakatsu F."/>
            <person name="Ohno H."/>
        </authorList>
    </citation>
    <scope>FUNCTION OF THE AP-2 COMPLEX IN CLATHRIN-MEDIATED ENDOCYTOSIS</scope>
</reference>
<reference key="9">
    <citation type="journal article" date="2003" name="J. Biol. Chem.">
        <title>The AP-2 complex is excluded from the dynamic population of plasma membrane-associated clathrin.</title>
        <authorList>
            <person name="Rappoport J.Z."/>
            <person name="Taha B.W."/>
            <person name="Lemeer S."/>
            <person name="Benmerah A."/>
            <person name="Simon S.M."/>
        </authorList>
    </citation>
    <scope>SUBCELLULAR LOCATION</scope>
</reference>
<reference key="10">
    <citation type="journal article" date="2004" name="Annu. Rev. Cell Dev. Biol.">
        <title>Adaptors for clathrin coats: structure and function.</title>
        <authorList>
            <person name="Owen D.J."/>
            <person name="Collins B.M."/>
            <person name="Evans P.R."/>
        </authorList>
    </citation>
    <scope>FUNCTION OF THE AP-2 COMPLEX IN CLATHRIN-MEDIATED ENDOCYTOSIS</scope>
</reference>
<reference key="11">
    <citation type="journal article" date="2004" name="J. Biol. Chem.">
        <title>Analysis of clathrin-mediated endocytosis of epidermal growth factor receptor by RNA interference.</title>
        <authorList>
            <person name="Huang F."/>
            <person name="Khvorova A."/>
            <person name="Marshall W."/>
            <person name="Sorkin A."/>
        </authorList>
    </citation>
    <scope>FUNCTION IN CLATHRIN-MEDIATED ENDOCYTOSIS</scope>
</reference>
<reference key="12">
    <citation type="journal article" date="2005" name="J. Biol. Chem.">
        <title>Functional dissection of an AP-2 beta2 appendage-binding sequence within the autosomal recessive hypercholesterolemia protein.</title>
        <authorList>
            <person name="Mishra S.K."/>
            <person name="Keyel P.A."/>
            <person name="Edeling M.A."/>
            <person name="Dupin A.L."/>
            <person name="Owen D.J."/>
            <person name="Traub L.M."/>
        </authorList>
    </citation>
    <scope>INTERACTION WITH LDLRAP1</scope>
    <scope>MUTAGENESIS OF TRP-841 AND TYR-888</scope>
</reference>
<reference key="13">
    <citation type="journal article" date="2006" name="J. Cell Sci.">
        <title>Endocytosis of the glucose transporter GLUT8 is mediated by interaction of a dileucine motif with the beta2-adaptin subunit of the AP-2 adaptor complex.</title>
        <authorList>
            <person name="Schmidt U."/>
            <person name="Briese S."/>
            <person name="Leicht K."/>
            <person name="Schuermann A."/>
            <person name="Joost H.-G."/>
            <person name="Al-Hasani H."/>
        </authorList>
    </citation>
    <scope>INTERACTION WITH SLC2A8</scope>
</reference>
<reference key="14">
    <citation type="journal article" date="2007" name="Cell. Signal.">
        <title>ARF6 regulates angiotensin II type 1 receptor endocytosis by controlling the recruitment of AP-2 and clathrin.</title>
        <authorList>
            <person name="Poupart M.-E."/>
            <person name="Fessart D."/>
            <person name="Cotton M."/>
            <person name="Laporte S.A."/>
            <person name="Claing A."/>
        </authorList>
    </citation>
    <scope>INTERACTION WITH ARF6</scope>
</reference>
<reference key="15">
    <citation type="journal article" date="2007" name="J. Cell Sci.">
        <title>Src-dependent phosphorylation of beta2-adaptin dissociates the beta-arrestin-AP-2 complex.</title>
        <authorList>
            <person name="Fessart D."/>
            <person name="Simaan M."/>
            <person name="Zimmerman B."/>
            <person name="Comeau J."/>
            <person name="Hamdan F.F."/>
            <person name="Wiseman P.W."/>
            <person name="Bouvier M."/>
            <person name="Laporte S.A."/>
        </authorList>
    </citation>
    <scope>PHOSPHORYLATION AT TYR-737</scope>
    <scope>INTERACTION WITH ARRB1</scope>
</reference>
<reference key="16">
    <citation type="journal article" date="2008" name="J. Cell Sci.">
        <title>The adaptor complex AP-2 regulates post-endocytic trafficking through the non-clathrin Arf6-dependent endocytic pathway.</title>
        <authorList>
            <person name="Lau A.W."/>
            <person name="Chou M.M."/>
        </authorList>
    </citation>
    <scope>FUNCTION OF THE AP-2 COMPLEX IN NON-CLATHRIN-DEPENDENT ENDOCYTOSIS</scope>
</reference>
<reference key="17">
    <citation type="journal article" date="2008" name="Mol. Cell">
        <title>Kinase-selective enrichment enables quantitative phosphoproteomics of the kinome across the cell cycle.</title>
        <authorList>
            <person name="Daub H."/>
            <person name="Olsen J.V."/>
            <person name="Bairlein M."/>
            <person name="Gnad F."/>
            <person name="Oppermann F.S."/>
            <person name="Korner R."/>
            <person name="Greff Z."/>
            <person name="Keri G."/>
            <person name="Stemmann O."/>
            <person name="Mann M."/>
        </authorList>
    </citation>
    <scope>IDENTIFICATION BY MASS SPECTROMETRY [LARGE SCALE ANALYSIS]</scope>
    <source>
        <tissue>Cervix carcinoma</tissue>
    </source>
</reference>
<reference key="18">
    <citation type="journal article" date="2009" name="Cell. Signal.">
        <title>c-Src-mediated phosphorylation of AP-2 reveals a general mechanism for receptors internalizing through the clathrin pathway.</title>
        <authorList>
            <person name="Zimmerman B."/>
            <person name="Simaan M."/>
            <person name="Lee M.-H."/>
            <person name="Luttrell L.M."/>
            <person name="Laporte S.A."/>
        </authorList>
    </citation>
    <scope>PHOSPHORYLATION AT TYR-737</scope>
</reference>
<reference key="19">
    <citation type="journal article" date="2009" name="Science">
        <title>Lysine acetylation targets protein complexes and co-regulates major cellular functions.</title>
        <authorList>
            <person name="Choudhary C."/>
            <person name="Kumar C."/>
            <person name="Gnad F."/>
            <person name="Nielsen M.L."/>
            <person name="Rehman M."/>
            <person name="Walther T.C."/>
            <person name="Olsen J.V."/>
            <person name="Mann M."/>
        </authorList>
    </citation>
    <scope>ACETYLATION [LARGE SCALE ANALYSIS] AT LYS-265</scope>
    <scope>IDENTIFICATION BY MASS SPECTROMETRY [LARGE SCALE ANALYSIS]</scope>
</reference>
<reference key="20">
    <citation type="journal article" date="2010" name="J. Biol. Chem.">
        <title>The connecdenn family, Rab35 guanine nucleotide exchange factors interfacing with the clathrin machinery.</title>
        <authorList>
            <person name="Marat A.L."/>
            <person name="McPherson P.S."/>
        </authorList>
    </citation>
    <scope>INTERACTION WITH DENND1B</scope>
    <scope>MUTAGENESIS OF TRP-841; GLU-849; TYR-888 AND GLU-902</scope>
</reference>
<reference key="21">
    <citation type="journal article" date="2011" name="BMC Syst. Biol.">
        <title>Initial characterization of the human central proteome.</title>
        <authorList>
            <person name="Burkard T.R."/>
            <person name="Planyavsky M."/>
            <person name="Kaupe I."/>
            <person name="Breitwieser F.P."/>
            <person name="Buerckstuemmer T."/>
            <person name="Bennett K.L."/>
            <person name="Superti-Furga G."/>
            <person name="Colinge J."/>
        </authorList>
    </citation>
    <scope>IDENTIFICATION BY MASS SPECTROMETRY [LARGE SCALE ANALYSIS]</scope>
</reference>
<reference key="22">
    <citation type="journal article" date="2012" name="Nat. Cell Biol.">
        <title>Distinct and separable activities of the endocytic clathrin-coat components Fcho1/2 and AP-2 in developmental patterning.</title>
        <authorList>
            <person name="Umasankar P.K."/>
            <person name="Sanker S."/>
            <person name="Thieman J.R."/>
            <person name="Chakraborty S."/>
            <person name="Wendland B."/>
            <person name="Tsang M."/>
            <person name="Traub L.M."/>
        </authorList>
    </citation>
    <scope>INTERACTION WITH FCHO1</scope>
</reference>
<reference key="23">
    <citation type="journal article" date="2012" name="Proc. Natl. Acad. Sci. U.S.A.">
        <title>N-terminal acetylome analyses and functional insights of the N-terminal acetyltransferase NatB.</title>
        <authorList>
            <person name="Van Damme P."/>
            <person name="Lasa M."/>
            <person name="Polevoda B."/>
            <person name="Gazquez C."/>
            <person name="Elosegui-Artola A."/>
            <person name="Kim D.S."/>
            <person name="De Juan-Pardo E."/>
            <person name="Demeyer K."/>
            <person name="Hole K."/>
            <person name="Larrea E."/>
            <person name="Timmerman E."/>
            <person name="Prieto J."/>
            <person name="Arnesen T."/>
            <person name="Sherman F."/>
            <person name="Gevaert K."/>
            <person name="Aldabe R."/>
        </authorList>
    </citation>
    <scope>ACETYLATION [LARGE SCALE ANALYSIS] AT THR-2</scope>
    <scope>CLEAVAGE OF INITIATOR METHIONINE [LARGE SCALE ANALYSIS]</scope>
    <scope>IDENTIFICATION BY MASS SPECTROMETRY [LARGE SCALE ANALYSIS]</scope>
</reference>
<reference key="24">
    <citation type="journal article" date="2013" name="J. Clin. Invest.">
        <title>Endocytosis of synaptic ADAM10 in neuronal plasticity and Alzheimer's disease.</title>
        <authorList>
            <person name="Marcello E."/>
            <person name="Saraceno C."/>
            <person name="Musardo S."/>
            <person name="Vara H."/>
            <person name="de la Fuente A.G."/>
            <person name="Pelucchi S."/>
            <person name="Di Marino D."/>
            <person name="Borroni B."/>
            <person name="Tramontano A."/>
            <person name="Perez-Otano I."/>
            <person name="Padovani A."/>
            <person name="Giustetto M."/>
            <person name="Gardoni F."/>
            <person name="Di Luca M."/>
        </authorList>
    </citation>
    <scope>FUNCTION</scope>
    <scope>INTERACTION WITH ADAM10</scope>
    <scope>TISSUE SPECIFICITY</scope>
</reference>
<reference key="25">
    <citation type="journal article" date="2013" name="J. Proteome Res.">
        <title>Toward a comprehensive characterization of a human cancer cell phosphoproteome.</title>
        <authorList>
            <person name="Zhou H."/>
            <person name="Di Palma S."/>
            <person name="Preisinger C."/>
            <person name="Peng M."/>
            <person name="Polat A.N."/>
            <person name="Heck A.J."/>
            <person name="Mohammed S."/>
        </authorList>
    </citation>
    <scope>PHOSPHORYLATION [LARGE SCALE ANALYSIS] AT SER-4</scope>
    <scope>IDENTIFICATION BY MASS SPECTROMETRY [LARGE SCALE ANALYSIS]</scope>
    <source>
        <tissue>Cervix carcinoma</tissue>
    </source>
</reference>
<reference key="26">
    <citation type="journal article" date="2014" name="J. Proteomics">
        <title>An enzyme assisted RP-RPLC approach for in-depth analysis of human liver phosphoproteome.</title>
        <authorList>
            <person name="Bian Y."/>
            <person name="Song C."/>
            <person name="Cheng K."/>
            <person name="Dong M."/>
            <person name="Wang F."/>
            <person name="Huang J."/>
            <person name="Sun D."/>
            <person name="Wang L."/>
            <person name="Ye M."/>
            <person name="Zou H."/>
        </authorList>
    </citation>
    <scope>IDENTIFICATION BY MASS SPECTROMETRY [LARGE SCALE ANALYSIS]</scope>
    <source>
        <tissue>Liver</tissue>
    </source>
</reference>
<reference key="27">
    <citation type="journal article" date="2015" name="Proteomics">
        <title>N-terminome analysis of the human mitochondrial proteome.</title>
        <authorList>
            <person name="Vaca Jacome A.S."/>
            <person name="Rabilloud T."/>
            <person name="Schaeffer-Reiss C."/>
            <person name="Rompais M."/>
            <person name="Ayoub D."/>
            <person name="Lane L."/>
            <person name="Bairoch A."/>
            <person name="Van Dorsselaer A."/>
            <person name="Carapito C."/>
        </authorList>
    </citation>
    <scope>IDENTIFICATION BY MASS SPECTROMETRY [LARGE SCALE ANALYSIS]</scope>
</reference>
<reference key="28">
    <citation type="journal article" date="2016" name="J. Immunol.">
        <title>Raftlin controls lipopolysaccharide-induced TLR4 internalization and TICAM-1 signaling in a cell type-specific manner.</title>
        <authorList>
            <person name="Tatematsu M."/>
            <person name="Yoshida R."/>
            <person name="Morioka Y."/>
            <person name="Ishii N."/>
            <person name="Funami K."/>
            <person name="Watanabe A."/>
            <person name="Saeki K."/>
            <person name="Seya T."/>
            <person name="Matsumoto M."/>
        </authorList>
    </citation>
    <scope>INTERACTION WITH RFTN1</scope>
    <scope>IDENTIFICATION BY MASS SPECTROMETRY</scope>
</reference>
<reference key="29">
    <citation type="journal article" date="2017" name="Cell Rep.">
        <title>APache is an AP2-interacting protein involved in synaptic vesicle trafficking and neuronal development.</title>
        <authorList>
            <person name="Piccini A."/>
            <person name="Castroflorio E."/>
            <person name="Valente P."/>
            <person name="Guarnieri F.C."/>
            <person name="Aprile D."/>
            <person name="Michetti C."/>
            <person name="Bramini M."/>
            <person name="Giansante G."/>
            <person name="Pinto B."/>
            <person name="Savardi A."/>
            <person name="Cesca F."/>
            <person name="Bachi A."/>
            <person name="Cattaneo A."/>
            <person name="Wren J.D."/>
            <person name="Fassio A."/>
            <person name="Valtorta F."/>
            <person name="Benfenati F."/>
            <person name="Giovedi S."/>
        </authorList>
    </citation>
    <scope>INTERACTION WITH KIAA1107</scope>
</reference>
<reference key="30">
    <citation type="journal article" date="2000" name="EMBO J.">
        <title>The structure and function of the beta 2-adaptin appendage domain.</title>
        <authorList>
            <person name="Owen D.J."/>
            <person name="Vallis Y."/>
            <person name="Pearse B.M.F."/>
            <person name="McMahon H.T."/>
            <person name="Evans P.R."/>
        </authorList>
    </citation>
    <scope>X-RAY CRYSTALLOGRAPHY (1.7 ANGSTROMS) OF 701-937</scope>
    <scope>MUTAGENESIS OF ARG-879; TYR-888 AND LYS-917</scope>
    <scope>INTERACTION WITH EPN1; EPS15; SNAP91 AND CLTC</scope>
</reference>
<reference key="31">
    <citation type="journal article" date="2002" name="Cell">
        <title>Molecular architecture and functional model of the endocytic AP2 complex.</title>
        <authorList>
            <person name="Collins B.M."/>
            <person name="McCoy A.J."/>
            <person name="Kent H.M."/>
            <person name="Evans P.R."/>
            <person name="Owen D.J."/>
        </authorList>
    </citation>
    <scope>X-RAY CRYSTALLOGRAPHY (2.59 ANGSTROMS) OF 1-591 IN COMPLEX WITH AP2A2; AP2M1; AP2S1 AND AN INOSITOL POLYPHOSPHATE HEADGROUP</scope>
</reference>
<reference key="32">
    <citation type="journal article" date="2006" name="Dev. Cell">
        <title>Molecular switches involving the AP-2 beta2 appendage regulate endocytic cargo selection and clathrin coat assembly.</title>
        <authorList>
            <person name="Edeling M.A."/>
            <person name="Mishra S.K."/>
            <person name="Keyel P.A."/>
            <person name="Steinhauser A.L."/>
            <person name="Collins B.M."/>
            <person name="Roth R."/>
            <person name="Heuser J.E."/>
            <person name="Owen D.J."/>
            <person name="Traub L.M."/>
        </authorList>
    </citation>
    <scope>X-RAY CRYSTALLOGRAPHY (1.60 ANGSTROMS) OF 701-937 IN COMPLEX WITH LDLRAP1</scope>
    <scope>INTERACTION WITH ARRB1; EPN1; SNAP91; AMPH AND BIN1</scope>
    <scope>MUTAGENESIS OF TYR-815; TRP-841; GLU-849; TYR-888 AND GLU-902</scope>
</reference>
<reference key="33">
    <citation type="journal article" date="2006" name="PLoS Biol.">
        <title>Role of the AP2 beta-appendage hub in recruiting partners for clathrin-coated vesicle assembly.</title>
        <authorList>
            <person name="Schmid E.M."/>
            <person name="Ford M.G.J."/>
            <person name="Burtey A."/>
            <person name="Praefcke G.J.K."/>
            <person name="Peak-Chew S.-Y."/>
            <person name="Mills I.G."/>
            <person name="Benmerah A."/>
            <person name="McMahon H.T."/>
        </authorList>
    </citation>
    <scope>X-RAY CRYSTALLOGRAPHY (1.9 ANGSTROMS) OF 700-937 IN COMPLEX WITH EPS15</scope>
    <scope>X-RAY CRYSTALLOGRAPHY (2.8 ANGSTROMS) OF 700-937 IN COMPLEX WITH ARRB1</scope>
    <scope>INTERACTION WITH SCYL1; SCYL2; EPS15; AMPH; SNAP91; ARRB1 AND LDLRAP1</scope>
    <scope>MUTAGENESIS OF TYR-815; TRP-841; LYS-842; GLN-851; ARG-879 AND TYR-888</scope>
</reference>
<reference key="34">
    <citation type="journal article" date="2008" name="Nature">
        <title>A structural explanation for the binding of endocytic dileucine motifs by the AP2 complex.</title>
        <authorList>
            <person name="Kelly B.T."/>
            <person name="McCoy A.J."/>
            <person name="Spaete K."/>
            <person name="Miller S.E."/>
            <person name="Evans P.R."/>
            <person name="Hoening S."/>
            <person name="Owen D.J."/>
        </authorList>
    </citation>
    <scope>X-RAY CRYSTALLOGRAPHY (1.60 ANGSTROMS) OF 1-591 IN COMPLEX WITH AP2A2; AP2M1; AP2S1 AND CD4 INTERNALIZATION SIGNAL</scope>
</reference>
<sequence>MTDSKYFTTNKKGEIFELKAELNNEKKEKRKEAVKKVIAAMTVGKDVSSLFPDVVNCMQTDNLELKKLVYLYLMNYAKSQPDMAIMAVNSFVKDCEDPNPLIRALAVRTMGCIRVDKITEYLCEPLRKCLKDEDPYVRKTAAVCVAKLHDINAQMVEDQGFLDSLRDLIADSNPMVVANAVAALSEISESHPNSNLLDLNPQNINKLLTALNECTEWGQIFILDCLSNYNPKDDREAQSICERVTPRLSHANSAVVLSAVKVLMKFLELLPKDSDYYNMLLKKLAPPLVTLLSGEPEVQYVALRNINLIVQKRPEILKQEIKVFFVKYNDPIYVKLEKLDIMIRLASQANIAQVLAELKEYATEVDVDFVRKAVRAIGRCAIKVEQSAERCVSTLLDLIQTKVNYVVQEAIVVIRDIFRKYPNKYESIIATLCENLDSLDEPDARAAMIWIVGEYAERIDNADELLESFLEGFHDESTQVQLTLLTAIVKLFLKKPSETQELVQQVLSLATQDSDNPDLRDRGYIYWRLLSTDPVTAKEVVLSEKPLISEETDLIEPTLLDELICHIGSLASVYHKPPNAFVEGSHGIHRKHLPIHHGSTDAGDSPVGTTTATNLEQPQVIPSQGDLLGDLLNLDLGPPVNVPQVSSMQMGAVDLLGGGLDSLVGQSFIPSSVPATFAPSPTPAVVSSGLNDLFELSTGIGMAPGGYVAPKAVWLPAVKAKGLEISGTFTHRQGHIYMEMNFTNKALQHMTDFAIQFNKNSFGVIPSTPLAIHTPLMPNQSIDVSLPLNTLGPVMKMEPLNNLQVAVKNNIDVFYFSCLIPLNVLFVEDGKMERQVFLATWKDIPNENELQFQIKECHLNADTVSSKLQNNNVYTIAKRNVEGQDMLYQSLKLTNGIWILAELRIQPGNPNYTLSLKCRAPEVSQYIYQVYDSILKN</sequence>
<protein>
    <recommendedName>
        <fullName>AP-2 complex subunit beta</fullName>
    </recommendedName>
    <alternativeName>
        <fullName>AP105B</fullName>
    </alternativeName>
    <alternativeName>
        <fullName>Adaptor protein complex AP-2 subunit beta</fullName>
    </alternativeName>
    <alternativeName>
        <fullName>Adaptor-related protein complex 2 subunit beta</fullName>
    </alternativeName>
    <alternativeName>
        <fullName>Beta-2-adaptin</fullName>
    </alternativeName>
    <alternativeName>
        <fullName>Beta-adaptin</fullName>
    </alternativeName>
    <alternativeName>
        <fullName>Clathrin assembly protein complex 2 beta large chain</fullName>
    </alternativeName>
    <alternativeName>
        <fullName>Plasma membrane adaptor HA2/AP2 adaptin beta subunit</fullName>
    </alternativeName>
</protein>
<accession>P63010</accession>
<accession>A6NJP3</accession>
<accession>P21851</accession>
<accession>Q7Z451</accession>
<accession>Q96J19</accession>
<gene>
    <name type="primary">AP2B1</name>
    <name type="synonym">ADTB2</name>
    <name type="synonym">CLAPB1</name>
</gene>
<evidence type="ECO:0000250" key="1">
    <source>
        <dbReference type="UniProtKB" id="P62944"/>
    </source>
</evidence>
<evidence type="ECO:0000269" key="2">
    <source>
    </source>
</evidence>
<evidence type="ECO:0000269" key="3">
    <source>
    </source>
</evidence>
<evidence type="ECO:0000269" key="4">
    <source>
    </source>
</evidence>
<evidence type="ECO:0000269" key="5">
    <source>
    </source>
</evidence>
<evidence type="ECO:0000269" key="6">
    <source>
    </source>
</evidence>
<evidence type="ECO:0000269" key="7">
    <source>
    </source>
</evidence>
<evidence type="ECO:0000269" key="8">
    <source>
    </source>
</evidence>
<evidence type="ECO:0000269" key="9">
    <source>
    </source>
</evidence>
<evidence type="ECO:0000269" key="10">
    <source>
    </source>
</evidence>
<evidence type="ECO:0000269" key="11">
    <source>
    </source>
</evidence>
<evidence type="ECO:0000269" key="12">
    <source>
    </source>
</evidence>
<evidence type="ECO:0000269" key="13">
    <source>
    </source>
</evidence>
<evidence type="ECO:0000269" key="14">
    <source>
    </source>
</evidence>
<evidence type="ECO:0000269" key="15">
    <source>
    </source>
</evidence>
<evidence type="ECO:0000269" key="16">
    <source>
    </source>
</evidence>
<evidence type="ECO:0000269" key="17">
    <source>
    </source>
</evidence>
<evidence type="ECO:0000269" key="18">
    <source>
    </source>
</evidence>
<evidence type="ECO:0000269" key="19">
    <source>
    </source>
</evidence>
<evidence type="ECO:0000269" key="20">
    <source>
    </source>
</evidence>
<evidence type="ECO:0000269" key="21">
    <source>
    </source>
</evidence>
<evidence type="ECO:0000269" key="22">
    <source>
    </source>
</evidence>
<evidence type="ECO:0000269" key="23">
    <source>
    </source>
</evidence>
<evidence type="ECO:0000303" key="24">
    <source>
    </source>
</evidence>
<evidence type="ECO:0000303" key="25">
    <source>
    </source>
</evidence>
<evidence type="ECO:0000305" key="26"/>
<evidence type="ECO:0007744" key="27">
    <source>
    </source>
</evidence>
<evidence type="ECO:0007744" key="28">
    <source>
    </source>
</evidence>
<evidence type="ECO:0007744" key="29">
    <source>
    </source>
</evidence>
<evidence type="ECO:0007829" key="30">
    <source>
        <dbReference type="PDB" id="2G30"/>
    </source>
</evidence>
<evidence type="ECO:0007829" key="31">
    <source>
        <dbReference type="PDB" id="2JKR"/>
    </source>
</evidence>
<evidence type="ECO:0007829" key="32">
    <source>
        <dbReference type="PDB" id="2VGL"/>
    </source>
</evidence>
<evidence type="ECO:0007829" key="33">
    <source>
        <dbReference type="PDB" id="4UQI"/>
    </source>
</evidence>
<evidence type="ECO:0007829" key="34">
    <source>
        <dbReference type="PDB" id="6QH5"/>
    </source>
</evidence>
<organism>
    <name type="scientific">Homo sapiens</name>
    <name type="common">Human</name>
    <dbReference type="NCBI Taxonomy" id="9606"/>
    <lineage>
        <taxon>Eukaryota</taxon>
        <taxon>Metazoa</taxon>
        <taxon>Chordata</taxon>
        <taxon>Craniata</taxon>
        <taxon>Vertebrata</taxon>
        <taxon>Euteleostomi</taxon>
        <taxon>Mammalia</taxon>
        <taxon>Eutheria</taxon>
        <taxon>Euarchontoglires</taxon>
        <taxon>Primates</taxon>
        <taxon>Haplorrhini</taxon>
        <taxon>Catarrhini</taxon>
        <taxon>Hominidae</taxon>
        <taxon>Homo</taxon>
    </lineage>
</organism>
<proteinExistence type="evidence at protein level"/>
<keyword id="KW-0002">3D-structure</keyword>
<keyword id="KW-0007">Acetylation</keyword>
<keyword id="KW-0025">Alternative splicing</keyword>
<keyword id="KW-1003">Cell membrane</keyword>
<keyword id="KW-0168">Coated pit</keyword>
<keyword id="KW-0254">Endocytosis</keyword>
<keyword id="KW-0472">Membrane</keyword>
<keyword id="KW-0597">Phosphoprotein</keyword>
<keyword id="KW-0653">Protein transport</keyword>
<keyword id="KW-1267">Proteomics identification</keyword>
<keyword id="KW-1185">Reference proteome</keyword>
<keyword id="KW-0813">Transport</keyword>
<comment type="function">
    <text evidence="7 8 9 17 21">Component of the adaptor protein complex 2 (AP-2). Adaptor protein complexes function in protein transport via transport vesicles in different membrane traffic pathways. Adaptor protein complexes are vesicle coat components and appear to be involved in cargo selection and vesicle formation. AP-2 is involved in clathrin-dependent endocytosis in which cargo proteins are incorporated into vesicles surrounded by clathrin (clathrin-coated vesicles, CCVs) which are destined for fusion with the early endosome. The clathrin lattice serves as a mechanical scaffold but is itself unable to bind directly to membrane components. Clathrin-associated adaptor protein (AP) complexes which can bind directly to both the clathrin lattice and to the lipid and protein components of membranes are considered to be the major clathrin adaptors contributing the CCV formation. AP-2 also serves as a cargo receptor to selectively sort the membrane proteins involved in receptor-mediated endocytosis. AP-2 seems to play a role in the recycling of synaptic vesicle membranes from the presynaptic surface. AP-2 recognizes Y-X-X-[FILMV] (Y-X-X-Phi) and [ED]-X-X-X-L-[LI] endocytosis signal motifs within the cytosolic tails of transmembrane cargo molecules. AP-2 may also play a role in maintaining normal post-endocytic trafficking through the ARF6-regulated, non-clathrin pathway. During long-term potentiation in hippocampal neurons, AP-2 is responsible for the endocytosis of ADAM10 (PubMed:23676497). The AP-2 beta subunit acts via its C-terminal appendage domain as a scaffolding platform for endocytic accessory proteins; at least some clathrin-associated sorting proteins (CLASPs) are recognized by their [DE]-X(1,2)-F-X-X-[FL]-X-X-X-R motif. The AP-2 beta subunit binds to clathrin heavy chain, promoting clathrin lattice assembly; clathrin displaces at least some CLASPs from AP2B1 which probably then can be positioned for further coat assembly.</text>
</comment>
<comment type="subunit">
    <text evidence="1 2 3 4 5 10 11 12 13 14 15 18 19 20 21 22 23">Adaptor protein complex 2 (AP-2) is a heterotetramer composed of two large adaptins (alpha-type subunit AP2A1 or AP2A2 and beta-type subunit AP2B1), a medium adaptin (mu-type subunit AP2M1) and a small adaptin (sigma-type subunit AP2S1) (PubMed:12086608, PubMed:19140243). Interacts with EPN1 (PubMed:10944104, PubMed:16516836). Interacts with EPS15; clathrin competes with EPS15 (PubMed:10944104, PubMed:16903783). Interacts with SNAP91; clathrin competes with SNAP91 (PubMed:10944104, PubMed:16516836, PubMed:16903783). Interacts with CLTC; clathrin competes with EPS15, SNAP91 and PIP5K1C (PubMed:10944104). Interacts with LDLRAP1 (PubMed:15728179, PubMed:16516836, PubMed:16903783). Interacts with AMPH and BIN1 (PubMed:16516836, PubMed:16903783). Interacts with ARF6 (GDP-bound) (PubMed:17719203). Interacts (dephosphorylated at Tyr-737) with ARRB1; phosphorylation of AP2B1 at Tyr-737 disrupts the interaction (PubMed:11777907, PubMed:16516836, PubMed:16903783, PubMed:17456551). Interacts with SLC2A8 (PubMed:16723738). Interacts with SCYL1 and SCYL2 (PubMed:16903783). Interacts with TGFBR1 and TGFBR2 (PubMed:12429842). Interacts with PIP5K1C; clathrin competes with PIP5K1C (By similarity). Interacts with DENND1B, but not with DENND1A, nor DENND1C (PubMed:20154091). Interacts with FCHO1 (PubMed:22484487). Interacts with RFTN1 (PubMed:27022195). Interacts with KIAA1107 (PubMed:29262337). Together with AP2A1 or AP2A2 and AP2M1, it interacts with ADAM10; this interaction facilitates ADAM10 endocytosis from the plasma membrane during long-term potentiation in hippocampal neurons (PubMed:23676497).</text>
</comment>
<comment type="interaction">
    <interactant intactId="EBI-432924">
        <id>P63010</id>
    </interactant>
    <interactant intactId="EBI-395282">
        <id>Q9UHB7</id>
        <label>AFF4</label>
    </interactant>
    <organismsDiffer>false</organismsDiffer>
    <experiments>3</experiments>
</comment>
<comment type="interaction">
    <interactant intactId="EBI-432924">
        <id>P63010</id>
    </interactant>
    <interactant intactId="EBI-10261324">
        <id>Q9UHB7-2</id>
        <label>AFF4</label>
    </interactant>
    <organismsDiffer>false</organismsDiffer>
    <experiments>3</experiments>
</comment>
<comment type="interaction">
    <interactant intactId="EBI-432924">
        <id>P63010</id>
    </interactant>
    <interactant intactId="EBI-541426">
        <id>Q9BXS5</id>
        <label>AP1M1</label>
    </interactant>
    <organismsDiffer>false</organismsDiffer>
    <experiments>4</experiments>
</comment>
<comment type="interaction">
    <interactant intactId="EBI-432924">
        <id>P63010</id>
    </interactant>
    <interactant intactId="EBI-752250">
        <id>Q9Y6Q5</id>
        <label>AP1M2</label>
    </interactant>
    <organismsDiffer>false</organismsDiffer>
    <experiments>6</experiments>
</comment>
<comment type="interaction">
    <interactant intactId="EBI-432924">
        <id>P63010</id>
    </interactant>
    <interactant intactId="EBI-297683">
        <id>Q96CW1</id>
        <label>AP2M1</label>
    </interactant>
    <organismsDiffer>false</organismsDiffer>
    <experiments>7</experiments>
</comment>
<comment type="interaction">
    <interactant intactId="EBI-432924">
        <id>P63010</id>
    </interactant>
    <interactant intactId="EBI-602041">
        <id>Q15811</id>
        <label>ITSN1</label>
    </interactant>
    <organismsDiffer>false</organismsDiffer>
    <experiments>5</experiments>
</comment>
<comment type="interaction">
    <interactant intactId="EBI-432924">
        <id>P63010</id>
    </interactant>
    <interactant intactId="EBI-349938">
        <id>P52292</id>
        <label>KPNA2</label>
    </interactant>
    <organismsDiffer>false</organismsDiffer>
    <experiments>3</experiments>
</comment>
<comment type="interaction">
    <interactant intactId="EBI-432924">
        <id>P63010</id>
    </interactant>
    <interactant intactId="EBI-747813">
        <id>Q5SW96</id>
        <label>LDLRAP1</label>
    </interactant>
    <organismsDiffer>false</organismsDiffer>
    <experiments>4</experiments>
</comment>
<comment type="interaction">
    <interactant intactId="EBI-432924">
        <id>P63010</id>
    </interactant>
    <interactant intactId="EBI-744921">
        <id>Q16626</id>
        <label>MEA1</label>
    </interactant>
    <organismsDiffer>false</organismsDiffer>
    <experiments>4</experiments>
</comment>
<comment type="interaction">
    <interactant intactId="EBI-432924">
        <id>P63010</id>
    </interactant>
    <interactant intactId="EBI-742525">
        <id>Q9NVZ3</id>
        <label>NECAP2</label>
    </interactant>
    <organismsDiffer>false</organismsDiffer>
    <experiments>4</experiments>
</comment>
<comment type="interaction">
    <interactant intactId="EBI-432924">
        <id>P63010</id>
    </interactant>
    <interactant intactId="EBI-10277551">
        <id>Q8WWR8-2</id>
        <label>NEU4</label>
    </interactant>
    <organismsDiffer>false</organismsDiffer>
    <experiments>3</experiments>
</comment>
<comment type="interaction">
    <interactant intactId="EBI-432924">
        <id>P63010</id>
    </interactant>
    <interactant intactId="EBI-356254">
        <id>P12236</id>
        <label>SLC25A6</label>
    </interactant>
    <organismsDiffer>false</organismsDiffer>
    <experiments>4</experiments>
</comment>
<comment type="interaction">
    <interactant intactId="EBI-432924">
        <id>P63010</id>
    </interactant>
    <interactant intactId="EBI-741515">
        <id>Q9NVV9</id>
        <label>THAP1</label>
    </interactant>
    <organismsDiffer>false</organismsDiffer>
    <experiments>4</experiments>
</comment>
<comment type="interaction">
    <interactant intactId="EBI-432924">
        <id>P63010</id>
    </interactant>
    <interactant intactId="EBI-2932492">
        <id>Q99757</id>
        <label>TXN2</label>
    </interactant>
    <organismsDiffer>false</organismsDiffer>
    <experiments>3</experiments>
</comment>
<comment type="interaction">
    <interactant intactId="EBI-432924">
        <id>P63010</id>
    </interactant>
    <interactant intactId="EBI-632461">
        <id>Q01081</id>
        <label>U2AF1</label>
    </interactant>
    <organismsDiffer>false</organismsDiffer>
    <experiments>3</experiments>
</comment>
<comment type="interaction">
    <interactant intactId="EBI-432924">
        <id>P63010</id>
    </interactant>
    <interactant intactId="EBI-10265517">
        <id>Q8N4L5</id>
        <label>XRCC6BP1</label>
    </interactant>
    <organismsDiffer>false</organismsDiffer>
    <experiments>3</experiments>
</comment>
<comment type="interaction">
    <interactant intactId="EBI-432924">
        <id>P63010</id>
    </interactant>
    <interactant intactId="EBI-297693">
        <id>P84092</id>
        <label>Ap2m1</label>
    </interactant>
    <organismsDiffer>true</organismsDiffer>
    <experiments>4</experiments>
</comment>
<comment type="interaction">
    <interactant intactId="EBI-432924">
        <id>P63010</id>
    </interactant>
    <interactant intactId="EBI-7592476">
        <id>Q9CR95</id>
        <label>Necap1</label>
    </interactant>
    <organismsDiffer>true</organismsDiffer>
    <experiments>2</experiments>
</comment>
<comment type="interaction">
    <interactant intactId="EBI-432924">
        <id>P63010</id>
    </interactant>
    <interactant intactId="EBI-2899393">
        <id>Q64729</id>
        <label>Tgfbr1</label>
    </interactant>
    <organismsDiffer>true</organismsDiffer>
    <experiments>3</experiments>
</comment>
<comment type="interaction">
    <interactant intactId="EBI-11529439">
        <id>P63010-2</id>
    </interactant>
    <interactant intactId="EBI-640741">
        <id>P01023</id>
        <label>A2M</label>
    </interactant>
    <organismsDiffer>false</organismsDiffer>
    <experiments>3</experiments>
</comment>
<comment type="interaction">
    <interactant intactId="EBI-11529439">
        <id>P63010-2</id>
    </interactant>
    <interactant intactId="EBI-21535880">
        <id>Q92870-2</id>
        <label>APBB2</label>
    </interactant>
    <organismsDiffer>false</organismsDiffer>
    <experiments>3</experiments>
</comment>
<comment type="interaction">
    <interactant intactId="EBI-11529439">
        <id>P63010-2</id>
    </interactant>
    <interactant intactId="EBI-77613">
        <id>P05067</id>
        <label>APP</label>
    </interactant>
    <organismsDiffer>false</organismsDiffer>
    <experiments>3</experiments>
</comment>
<comment type="interaction">
    <interactant intactId="EBI-11529439">
        <id>P63010-2</id>
    </interactant>
    <interactant intactId="EBI-17264467">
        <id>P05067-2</id>
        <label>APP</label>
    </interactant>
    <organismsDiffer>false</organismsDiffer>
    <experiments>3</experiments>
</comment>
<comment type="interaction">
    <interactant intactId="EBI-11529439">
        <id>P63010-2</id>
    </interactant>
    <interactant intactId="EBI-743313">
        <id>P49407</id>
        <label>ARRB1</label>
    </interactant>
    <organismsDiffer>false</organismsDiffer>
    <experiments>3</experiments>
</comment>
<comment type="interaction">
    <interactant intactId="EBI-11529439">
        <id>P63010-2</id>
    </interactant>
    <interactant intactId="EBI-930964">
        <id>P54253</id>
        <label>ATXN1</label>
    </interactant>
    <organismsDiffer>false</organismsDiffer>
    <experiments>6</experiments>
</comment>
<comment type="interaction">
    <interactant intactId="EBI-11529439">
        <id>P63010-2</id>
    </interactant>
    <interactant intactId="EBI-702390">
        <id>Q9UBB4</id>
        <label>ATXN10</label>
    </interactant>
    <organismsDiffer>false</organismsDiffer>
    <experiments>3</experiments>
</comment>
<comment type="interaction">
    <interactant intactId="EBI-11529439">
        <id>P63010-2</id>
    </interactant>
    <interactant intactId="EBI-739879">
        <id>Q53TS8</id>
        <label>C2CD6</label>
    </interactant>
    <organismsDiffer>false</organismsDiffer>
    <experiments>3</experiments>
</comment>
<comment type="interaction">
    <interactant intactId="EBI-11529439">
        <id>P63010-2</id>
    </interactant>
    <interactant intactId="EBI-12214501">
        <id>P02461-2</id>
        <label>COL3A1</label>
    </interactant>
    <organismsDiffer>false</organismsDiffer>
    <experiments>3</experiments>
</comment>
<comment type="interaction">
    <interactant intactId="EBI-11529439">
        <id>P63010-2</id>
    </interactant>
    <interactant intactId="EBI-8589586">
        <id>P09172</id>
        <label>DBH</label>
    </interactant>
    <organismsDiffer>false</organismsDiffer>
    <experiments>3</experiments>
</comment>
<comment type="interaction">
    <interactant intactId="EBI-11529439">
        <id>P63010-2</id>
    </interactant>
    <interactant intactId="EBI-25840379">
        <id>Q14203-5</id>
        <label>DCTN1</label>
    </interactant>
    <organismsDiffer>false</organismsDiffer>
    <experiments>3</experiments>
</comment>
<comment type="interaction">
    <interactant intactId="EBI-11529439">
        <id>P63010-2</id>
    </interactant>
    <interactant intactId="EBI-744302">
        <id>P14136</id>
        <label>GFAP</label>
    </interactant>
    <organismsDiffer>false</organismsDiffer>
    <experiments>3</experiments>
</comment>
<comment type="interaction">
    <interactant intactId="EBI-11529439">
        <id>P63010-2</id>
    </interactant>
    <interactant intactId="EBI-751540">
        <id>O95872</id>
        <label>GPANK1</label>
    </interactant>
    <organismsDiffer>false</organismsDiffer>
    <experiments>3</experiments>
</comment>
<comment type="interaction">
    <interactant intactId="EBI-11529439">
        <id>P63010-2</id>
    </interactant>
    <interactant intactId="EBI-12033200">
        <id>P78347-2</id>
        <label>GTF2I</label>
    </interactant>
    <organismsDiffer>false</organismsDiffer>
    <experiments>4</experiments>
</comment>
<comment type="interaction">
    <interactant intactId="EBI-11529439">
        <id>P63010-2</id>
    </interactant>
    <interactant intactId="EBI-466029">
        <id>P42858</id>
        <label>HTT</label>
    </interactant>
    <organismsDiffer>false</organismsDiffer>
    <experiments>18</experiments>
</comment>
<comment type="interaction">
    <interactant intactId="EBI-11529439">
        <id>P63010-2</id>
    </interactant>
    <interactant intactId="EBI-1055254">
        <id>Q8WXH2</id>
        <label>JPH3</label>
    </interactant>
    <organismsDiffer>false</organismsDiffer>
    <experiments>3</experiments>
</comment>
<comment type="interaction">
    <interactant intactId="EBI-11529439">
        <id>P63010-2</id>
    </interactant>
    <interactant intactId="EBI-2556193">
        <id>Q63ZY3</id>
        <label>KANK2</label>
    </interactant>
    <organismsDiffer>false</organismsDiffer>
    <experiments>3</experiments>
</comment>
<comment type="interaction">
    <interactant intactId="EBI-11529439">
        <id>P63010-2</id>
    </interactant>
    <interactant intactId="EBI-747813">
        <id>Q5SW96</id>
        <label>LDLRAP1</label>
    </interactant>
    <organismsDiffer>false</organismsDiffer>
    <experiments>5</experiments>
</comment>
<comment type="interaction">
    <interactant intactId="EBI-11529439">
        <id>P63010-2</id>
    </interactant>
    <interactant intactId="EBI-2341787">
        <id>Q17RB8</id>
        <label>LONRF1</label>
    </interactant>
    <organismsDiffer>false</organismsDiffer>
    <experiments>3</experiments>
</comment>
<comment type="interaction">
    <interactant intactId="EBI-11529439">
        <id>P63010-2</id>
    </interactant>
    <interactant intactId="EBI-1189067">
        <id>P51608</id>
        <label>MECP2</label>
    </interactant>
    <organismsDiffer>false</organismsDiffer>
    <experiments>3</experiments>
</comment>
<comment type="interaction">
    <interactant intactId="EBI-11529439">
        <id>P63010-2</id>
    </interactant>
    <interactant intactId="EBI-14086479">
        <id>Q8IVT4</id>
        <label>MGC50722</label>
    </interactant>
    <organismsDiffer>false</organismsDiffer>
    <experiments>3</experiments>
</comment>
<comment type="interaction">
    <interactant intactId="EBI-11529439">
        <id>P63010-2</id>
    </interactant>
    <interactant intactId="EBI-744248">
        <id>P40692</id>
        <label>MLH1</label>
    </interactant>
    <organismsDiffer>false</organismsDiffer>
    <experiments>8</experiments>
</comment>
<comment type="interaction">
    <interactant intactId="EBI-11529439">
        <id>P63010-2</id>
    </interactant>
    <interactant intactId="EBI-713665">
        <id>P19404</id>
        <label>NDUFV2</label>
    </interactant>
    <organismsDiffer>false</organismsDiffer>
    <experiments>3</experiments>
</comment>
<comment type="interaction">
    <interactant intactId="EBI-11529439">
        <id>P63010-2</id>
    </interactant>
    <interactant intactId="EBI-10277551">
        <id>Q8WWR8-2</id>
        <label>NEU4</label>
    </interactant>
    <organismsDiffer>false</organismsDiffer>
    <experiments>3</experiments>
</comment>
<comment type="interaction">
    <interactant intactId="EBI-11529439">
        <id>P63010-2</id>
    </interactant>
    <interactant intactId="EBI-1391623">
        <id>P29474</id>
        <label>NOS3</label>
    </interactant>
    <organismsDiffer>false</organismsDiffer>
    <experiments>3</experiments>
</comment>
<comment type="interaction">
    <interactant intactId="EBI-11529439">
        <id>P63010-2</id>
    </interactant>
    <interactant intactId="EBI-741048">
        <id>Q7Z3B4</id>
        <label>NUP54</label>
    </interactant>
    <organismsDiffer>false</organismsDiffer>
    <experiments>3</experiments>
</comment>
<comment type="interaction">
    <interactant intactId="EBI-11529439">
        <id>P63010-2</id>
    </interactant>
    <interactant intactId="EBI-1164361">
        <id>Q99497</id>
        <label>PARK7</label>
    </interactant>
    <organismsDiffer>false</organismsDiffer>
    <experiments>3</experiments>
</comment>
<comment type="interaction">
    <interactant intactId="EBI-11529439">
        <id>P63010-2</id>
    </interactant>
    <interactant intactId="EBI-752057">
        <id>Q7Z412</id>
        <label>PEX26</label>
    </interactant>
    <organismsDiffer>false</organismsDiffer>
    <experiments>3</experiments>
</comment>
<comment type="interaction">
    <interactant intactId="EBI-11529439">
        <id>P63010-2</id>
    </interactant>
    <interactant intactId="EBI-2846068">
        <id>Q9BXM7</id>
        <label>PINK1</label>
    </interactant>
    <organismsDiffer>false</organismsDiffer>
    <experiments>3</experiments>
</comment>
<comment type="interaction">
    <interactant intactId="EBI-11529439">
        <id>P63010-2</id>
    </interactant>
    <interactant intactId="EBI-50433196">
        <id>A0A6Q8PF08</id>
        <label>PMP22</label>
    </interactant>
    <organismsDiffer>false</organismsDiffer>
    <experiments>3</experiments>
</comment>
<comment type="interaction">
    <interactant intactId="EBI-11529439">
        <id>P63010-2</id>
    </interactant>
    <interactant intactId="EBI-11956563">
        <id>Q96HA1-2</id>
        <label>POM121</label>
    </interactant>
    <organismsDiffer>false</organismsDiffer>
    <experiments>3</experiments>
</comment>
<comment type="interaction">
    <interactant intactId="EBI-11529439">
        <id>P63010-2</id>
    </interactant>
    <interactant intactId="EBI-21251460">
        <id>O60260-5</id>
        <label>PRKN</label>
    </interactant>
    <organismsDiffer>false</organismsDiffer>
    <experiments>6</experiments>
</comment>
<comment type="interaction">
    <interactant intactId="EBI-11529439">
        <id>P63010-2</id>
    </interactant>
    <interactant intactId="EBI-11047108">
        <id>P49768-2</id>
        <label>PSEN1</label>
    </interactant>
    <organismsDiffer>false</organismsDiffer>
    <experiments>6</experiments>
</comment>
<comment type="interaction">
    <interactant intactId="EBI-11529439">
        <id>P63010-2</id>
    </interactant>
    <interactant intactId="EBI-11974061">
        <id>Q9UIG4</id>
        <label>PSORS1C2</label>
    </interactant>
    <organismsDiffer>false</organismsDiffer>
    <experiments>3</experiments>
</comment>
<comment type="interaction">
    <interactant intactId="EBI-11529439">
        <id>P63010-2</id>
    </interactant>
    <interactant intactId="EBI-985879">
        <id>P37840</id>
        <label>SNCA</label>
    </interactant>
    <organismsDiffer>false</organismsDiffer>
    <experiments>3</experiments>
</comment>
<comment type="interaction">
    <interactant intactId="EBI-11529439">
        <id>P63010-2</id>
    </interactant>
    <interactant intactId="EBI-990792">
        <id>P00441</id>
        <label>SOD1</label>
    </interactant>
    <organismsDiffer>false</organismsDiffer>
    <experiments>3</experiments>
</comment>
<comment type="interaction">
    <interactant intactId="EBI-11529439">
        <id>P63010-2</id>
    </interactant>
    <interactant intactId="EBI-372899">
        <id>Q13148</id>
        <label>TARDBP</label>
    </interactant>
    <organismsDiffer>false</organismsDiffer>
    <experiments>6</experiments>
</comment>
<comment type="interaction">
    <interactant intactId="EBI-11529439">
        <id>P63010-2</id>
    </interactant>
    <interactant intactId="EBI-12090309">
        <id>Q9BXU0</id>
        <label>TEX12</label>
    </interactant>
    <organismsDiffer>false</organismsDiffer>
    <experiments>3</experiments>
</comment>
<comment type="interaction">
    <interactant intactId="EBI-11529439">
        <id>P63010-2</id>
    </interactant>
    <interactant intactId="EBI-25847109">
        <id>O14656-2</id>
        <label>TOR1A</label>
    </interactant>
    <organismsDiffer>false</organismsDiffer>
    <experiments>3</experiments>
</comment>
<comment type="interaction">
    <interactant intactId="EBI-11529439">
        <id>P63010-2</id>
    </interactant>
    <interactant intactId="EBI-2932492">
        <id>Q99757</id>
        <label>TXN2</label>
    </interactant>
    <organismsDiffer>false</organismsDiffer>
    <experiments>3</experiments>
</comment>
<comment type="interaction">
    <interactant intactId="EBI-11529439">
        <id>P63010-2</id>
    </interactant>
    <interactant intactId="EBI-632461">
        <id>Q01081</id>
        <label>U2AF1</label>
    </interactant>
    <organismsDiffer>false</organismsDiffer>
    <experiments>3</experiments>
</comment>
<comment type="interaction">
    <interactant intactId="EBI-11529439">
        <id>P63010-2</id>
    </interactant>
    <interactant intactId="EBI-714860">
        <id>P09936</id>
        <label>UCHL1</label>
    </interactant>
    <organismsDiffer>false</organismsDiffer>
    <experiments>3</experiments>
</comment>
<comment type="interaction">
    <interactant intactId="EBI-11529439">
        <id>P63010-2</id>
    </interactant>
    <interactant intactId="EBI-1188298">
        <id>O95292</id>
        <label>VAPB</label>
    </interactant>
    <organismsDiffer>false</organismsDiffer>
    <experiments>3</experiments>
</comment>
<comment type="interaction">
    <interactant intactId="EBI-11529439">
        <id>P63010-2</id>
    </interactant>
    <interactant intactId="EBI-10255097">
        <id>Q6ZN96</id>
    </interactant>
    <organismsDiffer>false</organismsDiffer>
    <experiments>3</experiments>
</comment>
<comment type="subcellular location">
    <subcellularLocation>
        <location evidence="6">Cell membrane</location>
    </subcellularLocation>
    <subcellularLocation>
        <location evidence="6">Membrane</location>
        <location evidence="6">Coated pit</location>
        <topology evidence="6">Peripheral membrane protein</topology>
        <orientation evidence="6">Cytoplasmic side</orientation>
    </subcellularLocation>
    <text>AP-2 appears to be excluded from internalizing CCVs and to disengage from sites of endocytosis seconds before internalization of the nascent CCV.</text>
</comment>
<comment type="alternative products">
    <event type="alternative splicing"/>
    <isoform>
        <id>P63010-1</id>
        <name>1</name>
        <sequence type="displayed"/>
    </isoform>
    <isoform>
        <id>P63010-2</id>
        <name>2</name>
        <sequence type="described" ref="VSP_011490"/>
    </isoform>
    <isoform>
        <id>P63010-3</id>
        <name>3</name>
        <name>Ap2beta-NY</name>
        <sequence type="described" ref="VSP_047805"/>
    </isoform>
</comment>
<comment type="tissue specificity">
    <text evidence="21">Expressed in the brain (at protein level).</text>
</comment>
<comment type="PTM">
    <text evidence="14 16">Phosphorylation at Tyr-737 by SRC occurs at the plasma membrane in clathrin-coated vesicles (CCVs).</text>
</comment>
<comment type="miscellaneous">
    <molecule>Isoform 3</molecule>
    <text evidence="26">Highly expressed in the testis, spleen, thymus, prostate, ovary, blood leukocyte and brain, but not in the heart, placenta, lung, liver, skeletal muscle, kidney and pancreas. Testis expression is restricted to germ cells and is about 3-fold higher in adults than in embryos.</text>
</comment>
<comment type="similarity">
    <text evidence="26">Belongs to the adaptor complexes large subunit family.</text>
</comment>
<dbReference type="EMBL" id="M34175">
    <property type="protein sequence ID" value="AAA35583.1"/>
    <property type="molecule type" value="mRNA"/>
</dbReference>
<dbReference type="EMBL" id="AY341427">
    <property type="protein sequence ID" value="AAQ20044.1"/>
    <property type="molecule type" value="mRNA"/>
</dbReference>
<dbReference type="EMBL" id="AC004134">
    <property type="status" value="NOT_ANNOTATED_CDS"/>
    <property type="molecule type" value="Genomic_DNA"/>
</dbReference>
<dbReference type="EMBL" id="AC006237">
    <property type="status" value="NOT_ANNOTATED_CDS"/>
    <property type="molecule type" value="Genomic_DNA"/>
</dbReference>
<dbReference type="EMBL" id="AC015911">
    <property type="status" value="NOT_ANNOTATED_CDS"/>
    <property type="molecule type" value="Genomic_DNA"/>
</dbReference>
<dbReference type="EMBL" id="CH471147">
    <property type="protein sequence ID" value="EAW80133.1"/>
    <property type="molecule type" value="Genomic_DNA"/>
</dbReference>
<dbReference type="EMBL" id="CH471147">
    <property type="protein sequence ID" value="EAW80139.1"/>
    <property type="molecule type" value="Genomic_DNA"/>
</dbReference>
<dbReference type="EMBL" id="BC006201">
    <property type="protein sequence ID" value="AAH06201.1"/>
    <property type="molecule type" value="mRNA"/>
</dbReference>
<dbReference type="CCDS" id="CCDS32621.1">
    <molecule id="P63010-2"/>
</dbReference>
<dbReference type="CCDS" id="CCDS32622.1">
    <molecule id="P63010-1"/>
</dbReference>
<dbReference type="PIR" id="A35553">
    <property type="entry name" value="A35553"/>
</dbReference>
<dbReference type="RefSeq" id="NP_001025177.1">
    <molecule id="P63010-2"/>
    <property type="nucleotide sequence ID" value="NM_001030006.2"/>
</dbReference>
<dbReference type="RefSeq" id="NP_001273.1">
    <molecule id="P63010-1"/>
    <property type="nucleotide sequence ID" value="NM_001282.3"/>
</dbReference>
<dbReference type="RefSeq" id="XP_005257994.1">
    <molecule id="P63010-2"/>
    <property type="nucleotide sequence ID" value="XM_005257937.5"/>
</dbReference>
<dbReference type="RefSeq" id="XP_005257995.1">
    <molecule id="P63010-2"/>
    <property type="nucleotide sequence ID" value="XM_005257938.4"/>
</dbReference>
<dbReference type="RefSeq" id="XP_011522757.1">
    <property type="nucleotide sequence ID" value="XM_011524455.2"/>
</dbReference>
<dbReference type="RefSeq" id="XP_016879773.1">
    <molecule id="P63010-1"/>
    <property type="nucleotide sequence ID" value="XM_017024284.3"/>
</dbReference>
<dbReference type="RefSeq" id="XP_016879775.1">
    <property type="nucleotide sequence ID" value="XM_017024286.1"/>
</dbReference>
<dbReference type="RefSeq" id="XP_047291466.1">
    <molecule id="P63010-1"/>
    <property type="nucleotide sequence ID" value="XM_047435510.1"/>
</dbReference>
<dbReference type="RefSeq" id="XP_054171264.1">
    <molecule id="P63010-2"/>
    <property type="nucleotide sequence ID" value="XM_054315289.1"/>
</dbReference>
<dbReference type="RefSeq" id="XP_054171265.1">
    <molecule id="P63010-2"/>
    <property type="nucleotide sequence ID" value="XM_054315290.1"/>
</dbReference>
<dbReference type="RefSeq" id="XP_054171266.1">
    <molecule id="P63010-1"/>
    <property type="nucleotide sequence ID" value="XM_054315291.1"/>
</dbReference>
<dbReference type="RefSeq" id="XP_054171267.1">
    <molecule id="P63010-1"/>
    <property type="nucleotide sequence ID" value="XM_054315292.1"/>
</dbReference>
<dbReference type="PDB" id="1E42">
    <property type="method" value="X-ray"/>
    <property type="resolution" value="1.70 A"/>
    <property type="chains" value="A/B=701-937"/>
</dbReference>
<dbReference type="PDB" id="2G30">
    <property type="method" value="X-ray"/>
    <property type="resolution" value="1.60 A"/>
    <property type="chains" value="A=701-937"/>
</dbReference>
<dbReference type="PDB" id="2IV8">
    <property type="method" value="X-ray"/>
    <property type="resolution" value="2.80 A"/>
    <property type="chains" value="A=700-937"/>
</dbReference>
<dbReference type="PDB" id="2IV9">
    <property type="method" value="X-ray"/>
    <property type="resolution" value="1.90 A"/>
    <property type="chains" value="A/B=700-937"/>
</dbReference>
<dbReference type="PDB" id="2JKR">
    <property type="method" value="X-ray"/>
    <property type="resolution" value="2.98 A"/>
    <property type="chains" value="B/E=1-591"/>
</dbReference>
<dbReference type="PDB" id="2JKT">
    <property type="method" value="X-ray"/>
    <property type="resolution" value="3.40 A"/>
    <property type="chains" value="B/E=1-591"/>
</dbReference>
<dbReference type="PDB" id="2VGL">
    <property type="method" value="X-ray"/>
    <property type="resolution" value="2.59 A"/>
    <property type="chains" value="B=1-591"/>
</dbReference>
<dbReference type="PDB" id="2XA7">
    <property type="method" value="X-ray"/>
    <property type="resolution" value="3.10 A"/>
    <property type="chains" value="B=1-592"/>
</dbReference>
<dbReference type="PDB" id="4UQI">
    <property type="method" value="X-ray"/>
    <property type="resolution" value="2.79 A"/>
    <property type="chains" value="B=1-651"/>
</dbReference>
<dbReference type="PDB" id="5M5R">
    <property type="method" value="X-ray"/>
    <property type="resolution" value="1.76 A"/>
    <property type="chains" value="C/D=628-637"/>
</dbReference>
<dbReference type="PDB" id="6QH5">
    <property type="method" value="X-ray"/>
    <property type="resolution" value="2.56 A"/>
    <property type="chains" value="B=1-592"/>
</dbReference>
<dbReference type="PDB" id="6QH6">
    <property type="method" value="X-ray"/>
    <property type="resolution" value="5.00 A"/>
    <property type="chains" value="B=1-592"/>
</dbReference>
<dbReference type="PDB" id="6QH7">
    <property type="method" value="X-ray"/>
    <property type="resolution" value="3.40 A"/>
    <property type="chains" value="B=1-592"/>
</dbReference>
<dbReference type="PDB" id="6URI">
    <property type="method" value="X-ray"/>
    <property type="resolution" value="3.00 A"/>
    <property type="chains" value="B=1-591"/>
</dbReference>
<dbReference type="PDB" id="6YAE">
    <property type="method" value="EM"/>
    <property type="resolution" value="3.90 A"/>
    <property type="chains" value="B=1-591"/>
</dbReference>
<dbReference type="PDB" id="6YAF">
    <property type="method" value="EM"/>
    <property type="resolution" value="9.10 A"/>
    <property type="chains" value="B=1-937"/>
</dbReference>
<dbReference type="PDB" id="6YAH">
    <property type="method" value="EM"/>
    <property type="resolution" value="10.20 A"/>
    <property type="chains" value="B=1-937"/>
</dbReference>
<dbReference type="PDB" id="6YAI">
    <property type="method" value="EM"/>
    <property type="resolution" value="9.20 A"/>
    <property type="chains" value="F=705-937"/>
</dbReference>
<dbReference type="PDB" id="7OG1">
    <property type="method" value="X-ray"/>
    <property type="resolution" value="3.25 A"/>
    <property type="chains" value="BBB=1-591"/>
</dbReference>
<dbReference type="PDB" id="7OHO">
    <property type="method" value="X-ray"/>
    <property type="resolution" value="2.88 A"/>
    <property type="chains" value="BBB=1-542"/>
</dbReference>
<dbReference type="PDB" id="7OM8">
    <property type="method" value="EM"/>
    <property type="resolution" value="10.50 A"/>
    <property type="chains" value="B=705-937"/>
</dbReference>
<dbReference type="PDB" id="7Z5C">
    <property type="method" value="EM"/>
    <property type="resolution" value="4.16 A"/>
    <property type="chains" value="B=1-591"/>
</dbReference>
<dbReference type="PDBsum" id="1E42"/>
<dbReference type="PDBsum" id="2G30"/>
<dbReference type="PDBsum" id="2IV8"/>
<dbReference type="PDBsum" id="2IV9"/>
<dbReference type="PDBsum" id="2JKR"/>
<dbReference type="PDBsum" id="2JKT"/>
<dbReference type="PDBsum" id="2VGL"/>
<dbReference type="PDBsum" id="2XA7"/>
<dbReference type="PDBsum" id="4UQI"/>
<dbReference type="PDBsum" id="5M5R"/>
<dbReference type="PDBsum" id="6QH5"/>
<dbReference type="PDBsum" id="6QH6"/>
<dbReference type="PDBsum" id="6QH7"/>
<dbReference type="PDBsum" id="6URI"/>
<dbReference type="PDBsum" id="6YAE"/>
<dbReference type="PDBsum" id="6YAF"/>
<dbReference type="PDBsum" id="6YAH"/>
<dbReference type="PDBsum" id="6YAI"/>
<dbReference type="PDBsum" id="7OG1"/>
<dbReference type="PDBsum" id="7OHO"/>
<dbReference type="PDBsum" id="7OM8"/>
<dbReference type="PDBsum" id="7Z5C"/>
<dbReference type="EMDB" id="EMD-10747"/>
<dbReference type="EMDB" id="EMD-10748"/>
<dbReference type="EMDB" id="EMD-10751"/>
<dbReference type="EMDB" id="EMD-10754"/>
<dbReference type="EMDB" id="EMD-12984"/>
<dbReference type="EMDB" id="EMD-14517"/>
<dbReference type="SMR" id="P63010"/>
<dbReference type="BioGRID" id="106672">
    <property type="interactions" value="376"/>
</dbReference>
<dbReference type="ComplexPortal" id="CPX-5149">
    <property type="entry name" value="AP-2 Adaptor complex, alpha1 variant"/>
</dbReference>
<dbReference type="ComplexPortal" id="CPX-5150">
    <property type="entry name" value="AP-2 Adaptor complex, alpha2 variant"/>
</dbReference>
<dbReference type="CORUM" id="P63010"/>
<dbReference type="DIP" id="DIP-33098N"/>
<dbReference type="FunCoup" id="P63010">
    <property type="interactions" value="2778"/>
</dbReference>
<dbReference type="IntAct" id="P63010">
    <property type="interactions" value="217"/>
</dbReference>
<dbReference type="MINT" id="P63010"/>
<dbReference type="STRING" id="9606.ENSP00000483185"/>
<dbReference type="TCDB" id="9.B.278.1.4">
    <property type="family name" value="the organellar-targeting adaptor protein complex (o-apc) family"/>
</dbReference>
<dbReference type="GlyCosmos" id="P63010">
    <property type="glycosylation" value="2 sites, 1 glycan"/>
</dbReference>
<dbReference type="GlyGen" id="P63010">
    <property type="glycosylation" value="3 sites, 1 O-linked glycan (2 sites)"/>
</dbReference>
<dbReference type="iPTMnet" id="P63010"/>
<dbReference type="MetOSite" id="P63010"/>
<dbReference type="PhosphoSitePlus" id="P63010"/>
<dbReference type="SwissPalm" id="P63010"/>
<dbReference type="BioMuta" id="AP2B1"/>
<dbReference type="DMDM" id="51702211"/>
<dbReference type="jPOST" id="P63010"/>
<dbReference type="MassIVE" id="P63010"/>
<dbReference type="PaxDb" id="9606-ENSP00000482835"/>
<dbReference type="PeptideAtlas" id="P63010"/>
<dbReference type="ProteomicsDB" id="57469">
    <molecule id="P63010-1"/>
</dbReference>
<dbReference type="ProteomicsDB" id="57470">
    <molecule id="P63010-2"/>
</dbReference>
<dbReference type="ProteomicsDB" id="69151"/>
<dbReference type="Pumba" id="P63010"/>
<dbReference type="Antibodypedia" id="4320">
    <property type="antibodies" value="272 antibodies from 30 providers"/>
</dbReference>
<dbReference type="DNASU" id="163"/>
<dbReference type="Ensembl" id="ENST00000610402.5">
    <molecule id="P63010-2"/>
    <property type="protein sequence ID" value="ENSP00000483185.1"/>
    <property type="gene ID" value="ENSG00000006125.18"/>
</dbReference>
<dbReference type="Ensembl" id="ENST00000618940.4">
    <molecule id="P63010-2"/>
    <property type="protein sequence ID" value="ENSP00000482835.1"/>
    <property type="gene ID" value="ENSG00000006125.18"/>
</dbReference>
<dbReference type="Ensembl" id="ENST00000621914.4">
    <molecule id="P63010-1"/>
    <property type="protein sequence ID" value="ENSP00000482315.1"/>
    <property type="gene ID" value="ENSG00000006125.18"/>
</dbReference>
<dbReference type="GeneID" id="163"/>
<dbReference type="KEGG" id="hsa:163"/>
<dbReference type="MANE-Select" id="ENST00000610402.5">
    <molecule id="P63010-2"/>
    <property type="protein sequence ID" value="ENSP00000483185.1"/>
    <property type="RefSeq nucleotide sequence ID" value="NM_001030006.2"/>
    <property type="RefSeq protein sequence ID" value="NP_001025177.1"/>
</dbReference>
<dbReference type="UCSC" id="uc002hjq.4">
    <molecule id="P63010-1"/>
    <property type="organism name" value="human"/>
</dbReference>
<dbReference type="AGR" id="HGNC:563"/>
<dbReference type="CTD" id="163"/>
<dbReference type="DisGeNET" id="163"/>
<dbReference type="GeneCards" id="AP2B1"/>
<dbReference type="HGNC" id="HGNC:563">
    <property type="gene designation" value="AP2B1"/>
</dbReference>
<dbReference type="HPA" id="ENSG00000006125">
    <property type="expression patterns" value="Low tissue specificity"/>
</dbReference>
<dbReference type="MIM" id="601025">
    <property type="type" value="gene"/>
</dbReference>
<dbReference type="neXtProt" id="NX_P63010"/>
<dbReference type="OpenTargets" id="ENSG00000006125"/>
<dbReference type="PharmGKB" id="PA24854"/>
<dbReference type="VEuPathDB" id="HostDB:ENSG00000006125"/>
<dbReference type="eggNOG" id="KOG1061">
    <property type="taxonomic scope" value="Eukaryota"/>
</dbReference>
<dbReference type="GeneTree" id="ENSGT00940000155206"/>
<dbReference type="InParanoid" id="P63010"/>
<dbReference type="OMA" id="PECNEWG"/>
<dbReference type="OrthoDB" id="10254310at2759"/>
<dbReference type="PAN-GO" id="P63010">
    <property type="GO annotations" value="2 GO annotations based on evolutionary models"/>
</dbReference>
<dbReference type="PhylomeDB" id="P63010"/>
<dbReference type="TreeFam" id="TF300318"/>
<dbReference type="PathwayCommons" id="P63010"/>
<dbReference type="Reactome" id="R-HSA-167590">
    <property type="pathway name" value="Nef Mediated CD4 Down-regulation"/>
</dbReference>
<dbReference type="Reactome" id="R-HSA-177504">
    <property type="pathway name" value="Retrograde neurotrophin signalling"/>
</dbReference>
<dbReference type="Reactome" id="R-HSA-182218">
    <property type="pathway name" value="Nef Mediated CD8 Down-regulation"/>
</dbReference>
<dbReference type="Reactome" id="R-HSA-2132295">
    <property type="pathway name" value="MHC class II antigen presentation"/>
</dbReference>
<dbReference type="Reactome" id="R-HSA-3928665">
    <property type="pathway name" value="EPH-ephrin mediated repulsion of cells"/>
</dbReference>
<dbReference type="Reactome" id="R-HSA-416993">
    <molecule id="P63010-1"/>
    <property type="pathway name" value="Trafficking of GluR2-containing AMPA receptors"/>
</dbReference>
<dbReference type="Reactome" id="R-HSA-437239">
    <property type="pathway name" value="Recycling pathway of L1"/>
</dbReference>
<dbReference type="Reactome" id="R-HSA-5099900">
    <property type="pathway name" value="WNT5A-dependent internalization of FZD4"/>
</dbReference>
<dbReference type="Reactome" id="R-HSA-5140745">
    <property type="pathway name" value="WNT5A-dependent internalization of FZD2, FZD5 and ROR2"/>
</dbReference>
<dbReference type="Reactome" id="R-HSA-8856825">
    <property type="pathway name" value="Cargo recognition for clathrin-mediated endocytosis"/>
</dbReference>
<dbReference type="Reactome" id="R-HSA-8856828">
    <property type="pathway name" value="Clathrin-mediated endocytosis"/>
</dbReference>
<dbReference type="Reactome" id="R-HSA-8866427">
    <property type="pathway name" value="VLDLR internalisation and degradation"/>
</dbReference>
<dbReference type="Reactome" id="R-HSA-8964038">
    <property type="pathway name" value="LDL clearance"/>
</dbReference>
<dbReference type="Reactome" id="R-HSA-9679191">
    <property type="pathway name" value="Potential therapeutics for SARS"/>
</dbReference>
<dbReference type="SignaLink" id="P63010"/>
<dbReference type="SIGNOR" id="P63010"/>
<dbReference type="BioGRID-ORCS" id="163">
    <property type="hits" value="29 hits in 1154 CRISPR screens"/>
</dbReference>
<dbReference type="CD-CODE" id="91857CE7">
    <property type="entry name" value="Nucleolus"/>
</dbReference>
<dbReference type="CD-CODE" id="FB4E32DD">
    <property type="entry name" value="Presynaptic clusters and postsynaptic densities"/>
</dbReference>
<dbReference type="ChiTaRS" id="AP2B1">
    <property type="organism name" value="human"/>
</dbReference>
<dbReference type="EvolutionaryTrace" id="P63010"/>
<dbReference type="GeneWiki" id="AP2B1"/>
<dbReference type="GenomeRNAi" id="163"/>
<dbReference type="Pharos" id="P63010">
    <property type="development level" value="Tbio"/>
</dbReference>
<dbReference type="PRO" id="PR:P63010"/>
<dbReference type="Proteomes" id="UP000005640">
    <property type="component" value="Chromosome 17"/>
</dbReference>
<dbReference type="RNAct" id="P63010">
    <property type="molecule type" value="protein"/>
</dbReference>
<dbReference type="Bgee" id="ENSG00000006125">
    <property type="expression patterns" value="Expressed in cortical plate and 205 other cell types or tissues"/>
</dbReference>
<dbReference type="ExpressionAtlas" id="P63010">
    <property type="expression patterns" value="baseline and differential"/>
</dbReference>
<dbReference type="GO" id="GO:0030122">
    <property type="term" value="C:AP-2 adaptor complex"/>
    <property type="evidence" value="ECO:0000314"/>
    <property type="project" value="UniProtKB"/>
</dbReference>
<dbReference type="GO" id="GO:0030131">
    <property type="term" value="C:clathrin adaptor complex"/>
    <property type="evidence" value="ECO:0000314"/>
    <property type="project" value="MGI"/>
</dbReference>
<dbReference type="GO" id="GO:0045334">
    <property type="term" value="C:clathrin-coated endocytic vesicle"/>
    <property type="evidence" value="ECO:0000303"/>
    <property type="project" value="ARUK-UCL"/>
</dbReference>
<dbReference type="GO" id="GO:0030669">
    <property type="term" value="C:clathrin-coated endocytic vesicle membrane"/>
    <property type="evidence" value="ECO:0000304"/>
    <property type="project" value="Reactome"/>
</dbReference>
<dbReference type="GO" id="GO:0009898">
    <property type="term" value="C:cytoplasmic side of plasma membrane"/>
    <property type="evidence" value="ECO:0000303"/>
    <property type="project" value="ComplexPortal"/>
</dbReference>
<dbReference type="GO" id="GO:0005829">
    <property type="term" value="C:cytosol"/>
    <property type="evidence" value="ECO:0000304"/>
    <property type="project" value="Reactome"/>
</dbReference>
<dbReference type="GO" id="GO:0030666">
    <property type="term" value="C:endocytic vesicle membrane"/>
    <property type="evidence" value="ECO:0000304"/>
    <property type="project" value="Reactome"/>
</dbReference>
<dbReference type="GO" id="GO:0036020">
    <property type="term" value="C:endolysosome membrane"/>
    <property type="evidence" value="ECO:0000304"/>
    <property type="project" value="Reactome"/>
</dbReference>
<dbReference type="GO" id="GO:0098894">
    <property type="term" value="C:extrinsic component of presynaptic endocytic zone membrane"/>
    <property type="evidence" value="ECO:0007669"/>
    <property type="project" value="Ensembl"/>
</dbReference>
<dbReference type="GO" id="GO:0098978">
    <property type="term" value="C:glutamatergic synapse"/>
    <property type="evidence" value="ECO:0007669"/>
    <property type="project" value="Ensembl"/>
</dbReference>
<dbReference type="GO" id="GO:0016020">
    <property type="term" value="C:membrane"/>
    <property type="evidence" value="ECO:0007005"/>
    <property type="project" value="UniProtKB"/>
</dbReference>
<dbReference type="GO" id="GO:0005886">
    <property type="term" value="C:plasma membrane"/>
    <property type="evidence" value="ECO:0000304"/>
    <property type="project" value="Reactome"/>
</dbReference>
<dbReference type="GO" id="GO:0098843">
    <property type="term" value="C:postsynaptic endocytic zone"/>
    <property type="evidence" value="ECO:0007669"/>
    <property type="project" value="Ensembl"/>
</dbReference>
<dbReference type="GO" id="GO:0008021">
    <property type="term" value="C:synaptic vesicle"/>
    <property type="evidence" value="ECO:0007669"/>
    <property type="project" value="Ensembl"/>
</dbReference>
<dbReference type="GO" id="GO:0030276">
    <property type="term" value="F:clathrin binding"/>
    <property type="evidence" value="ECO:0000314"/>
    <property type="project" value="MGI"/>
</dbReference>
<dbReference type="GO" id="GO:0044877">
    <property type="term" value="F:protein-containing complex binding"/>
    <property type="evidence" value="ECO:0007669"/>
    <property type="project" value="Ensembl"/>
</dbReference>
<dbReference type="GO" id="GO:0005048">
    <property type="term" value="F:signal sequence binding"/>
    <property type="evidence" value="ECO:0000304"/>
    <property type="project" value="BHF-UCL"/>
</dbReference>
<dbReference type="GO" id="GO:0035904">
    <property type="term" value="P:aorta development"/>
    <property type="evidence" value="ECO:0007669"/>
    <property type="project" value="Ensembl"/>
</dbReference>
<dbReference type="GO" id="GO:0048268">
    <property type="term" value="P:clathrin coat assembly"/>
    <property type="evidence" value="ECO:0007669"/>
    <property type="project" value="Ensembl"/>
</dbReference>
<dbReference type="GO" id="GO:0072583">
    <property type="term" value="P:clathrin-dependent endocytosis"/>
    <property type="evidence" value="ECO:0000314"/>
    <property type="project" value="UniProtKB"/>
</dbReference>
<dbReference type="GO" id="GO:0060976">
    <property type="term" value="P:coronary vasculature development"/>
    <property type="evidence" value="ECO:0007669"/>
    <property type="project" value="Ensembl"/>
</dbReference>
<dbReference type="GO" id="GO:0006886">
    <property type="term" value="P:intracellular protein transport"/>
    <property type="evidence" value="ECO:0007669"/>
    <property type="project" value="InterPro"/>
</dbReference>
<dbReference type="GO" id="GO:0001822">
    <property type="term" value="P:kidney development"/>
    <property type="evidence" value="ECO:0007669"/>
    <property type="project" value="Ensembl"/>
</dbReference>
<dbReference type="GO" id="GO:0007269">
    <property type="term" value="P:neurotransmitter secretion"/>
    <property type="evidence" value="ECO:0007669"/>
    <property type="project" value="Ensembl"/>
</dbReference>
<dbReference type="GO" id="GO:0045807">
    <property type="term" value="P:positive regulation of endocytosis"/>
    <property type="evidence" value="ECO:0007669"/>
    <property type="project" value="Ensembl"/>
</dbReference>
<dbReference type="GO" id="GO:1905477">
    <property type="term" value="P:positive regulation of protein localization to membrane"/>
    <property type="evidence" value="ECO:0007669"/>
    <property type="project" value="Ensembl"/>
</dbReference>
<dbReference type="GO" id="GO:0098884">
    <property type="term" value="P:postsynaptic neurotransmitter receptor internalization"/>
    <property type="evidence" value="ECO:0000303"/>
    <property type="project" value="ComplexPortal"/>
</dbReference>
<dbReference type="GO" id="GO:0048488">
    <property type="term" value="P:synaptic vesicle endocytosis"/>
    <property type="evidence" value="ECO:0000314"/>
    <property type="project" value="SynGO"/>
</dbReference>
<dbReference type="GO" id="GO:0003281">
    <property type="term" value="P:ventricular septum development"/>
    <property type="evidence" value="ECO:0007669"/>
    <property type="project" value="Ensembl"/>
</dbReference>
<dbReference type="GO" id="GO:0016192">
    <property type="term" value="P:vesicle-mediated transport"/>
    <property type="evidence" value="ECO:0000303"/>
    <property type="project" value="ComplexPortal"/>
</dbReference>
<dbReference type="FunFam" id="1.25.10.10:FF:000002">
    <property type="entry name" value="AP complex subunit beta"/>
    <property type="match status" value="1"/>
</dbReference>
<dbReference type="FunFam" id="2.60.40.1150:FF:000001">
    <property type="entry name" value="AP complex subunit beta"/>
    <property type="match status" value="1"/>
</dbReference>
<dbReference type="FunFam" id="3.30.310.10:FF:000003">
    <property type="entry name" value="AP complex subunit beta"/>
    <property type="match status" value="1"/>
</dbReference>
<dbReference type="Gene3D" id="2.60.40.1150">
    <property type="match status" value="1"/>
</dbReference>
<dbReference type="Gene3D" id="1.25.10.10">
    <property type="entry name" value="Leucine-rich Repeat Variant"/>
    <property type="match status" value="1"/>
</dbReference>
<dbReference type="Gene3D" id="3.30.310.10">
    <property type="entry name" value="TATA-Binding Protein"/>
    <property type="match status" value="1"/>
</dbReference>
<dbReference type="InterPro" id="IPR026739">
    <property type="entry name" value="AP_beta"/>
</dbReference>
<dbReference type="InterPro" id="IPR016342">
    <property type="entry name" value="AP_complex_bsu_1_2_4"/>
</dbReference>
<dbReference type="InterPro" id="IPR011989">
    <property type="entry name" value="ARM-like"/>
</dbReference>
<dbReference type="InterPro" id="IPR016024">
    <property type="entry name" value="ARM-type_fold"/>
</dbReference>
<dbReference type="InterPro" id="IPR000225">
    <property type="entry name" value="Armadillo"/>
</dbReference>
<dbReference type="InterPro" id="IPR015151">
    <property type="entry name" value="B-adaptin_app_sub_C"/>
</dbReference>
<dbReference type="InterPro" id="IPR002553">
    <property type="entry name" value="Clathrin/coatomer_adapt-like_N"/>
</dbReference>
<dbReference type="InterPro" id="IPR008152">
    <property type="entry name" value="Clathrin_a/b/g-adaptin_app_Ig"/>
</dbReference>
<dbReference type="InterPro" id="IPR013041">
    <property type="entry name" value="Clathrin_app_Ig-like_sf"/>
</dbReference>
<dbReference type="InterPro" id="IPR013037">
    <property type="entry name" value="Clathrin_b-adaptin_app_Ig-like"/>
</dbReference>
<dbReference type="InterPro" id="IPR009028">
    <property type="entry name" value="Coatomer/calthrin_app_sub_C"/>
</dbReference>
<dbReference type="InterPro" id="IPR012295">
    <property type="entry name" value="TBP_dom_sf"/>
</dbReference>
<dbReference type="PANTHER" id="PTHR11134">
    <property type="entry name" value="ADAPTOR COMPLEX SUBUNIT BETA FAMILY MEMBER"/>
    <property type="match status" value="1"/>
</dbReference>
<dbReference type="Pfam" id="PF01602">
    <property type="entry name" value="Adaptin_N"/>
    <property type="match status" value="1"/>
</dbReference>
<dbReference type="Pfam" id="PF02883">
    <property type="entry name" value="Alpha_adaptinC2"/>
    <property type="match status" value="1"/>
</dbReference>
<dbReference type="Pfam" id="PF09066">
    <property type="entry name" value="B2-adapt-app_C"/>
    <property type="match status" value="1"/>
</dbReference>
<dbReference type="PIRSF" id="PIRSF002291">
    <property type="entry name" value="AP_complex_beta"/>
    <property type="match status" value="1"/>
</dbReference>
<dbReference type="SMART" id="SM00809">
    <property type="entry name" value="Alpha_adaptinC2"/>
    <property type="match status" value="1"/>
</dbReference>
<dbReference type="SMART" id="SM00185">
    <property type="entry name" value="ARM"/>
    <property type="match status" value="2"/>
</dbReference>
<dbReference type="SMART" id="SM01020">
    <property type="entry name" value="B2-adapt-app_C"/>
    <property type="match status" value="1"/>
</dbReference>
<dbReference type="SUPFAM" id="SSF48371">
    <property type="entry name" value="ARM repeat"/>
    <property type="match status" value="1"/>
</dbReference>
<dbReference type="SUPFAM" id="SSF49348">
    <property type="entry name" value="Clathrin adaptor appendage domain"/>
    <property type="match status" value="1"/>
</dbReference>
<dbReference type="SUPFAM" id="SSF55711">
    <property type="entry name" value="Subdomain of clathrin and coatomer appendage domain"/>
    <property type="match status" value="1"/>
</dbReference>
<feature type="initiator methionine" description="Removed" evidence="28">
    <location>
        <position position="1"/>
    </location>
</feature>
<feature type="chain" id="PRO_0000193742" description="AP-2 complex subunit beta">
    <location>
        <begin position="2"/>
        <end position="937"/>
    </location>
</feature>
<feature type="region of interest" description="Interaction with ARRB1">
    <location>
        <begin position="841"/>
        <end position="937"/>
    </location>
</feature>
<feature type="modified residue" description="N-acetylthreonine" evidence="28">
    <location>
        <position position="2"/>
    </location>
</feature>
<feature type="modified residue" description="Phosphoserine" evidence="29">
    <location>
        <position position="4"/>
    </location>
</feature>
<feature type="modified residue" description="N6-acetyllysine" evidence="27">
    <location>
        <position position="265"/>
    </location>
</feature>
<feature type="modified residue" description="Phosphotyrosine; by SRC" evidence="14 16">
    <location>
        <position position="737"/>
    </location>
</feature>
<feature type="modified residue" description="Phosphotyrosine" evidence="1">
    <location>
        <position position="928"/>
    </location>
</feature>
<feature type="splice variant" id="VSP_047805" description="In isoform 3." evidence="25">
    <location>
        <begin position="1"/>
        <end position="57"/>
    </location>
</feature>
<feature type="splice variant" id="VSP_011490" description="In isoform 2." evidence="24">
    <original>L</original>
    <variation>LLGSDLGGGIGGSPA</variation>
    <location>
        <position position="663"/>
    </location>
</feature>
<feature type="mutagenesis site" description="Strongly reduces interaction with SNAP91, EPS15, AMPH and BIN1 and clathrin heavy chain." evidence="11 13">
    <original>Y</original>
    <variation>A</variation>
    <location>
        <position position="815"/>
    </location>
</feature>
<feature type="mutagenesis site" description="Abolishes interaction with LDLRAP1 and ARRB1. Greatly reduces DENND1B-binding." evidence="10 11 13 19">
    <original>W</original>
    <variation>A</variation>
    <location>
        <position position="841"/>
    </location>
</feature>
<feature type="mutagenesis site" description="Strongly reduces interaction with ARRB1." evidence="13">
    <original>K</original>
    <variation>E</variation>
    <location>
        <position position="842"/>
    </location>
</feature>
<feature type="mutagenesis site" description="Strongly reduces interaction with LDLRAP1, ARRB1 and EPN1. No effect on DENND1B-binding." evidence="3 11 19">
    <original>E</original>
    <variation>A</variation>
    <location>
        <position position="849"/>
    </location>
</feature>
<feature type="mutagenesis site" description="Strongly reduces interaction with ARRB1." evidence="13">
    <original>Q</original>
    <variation>A</variation>
    <location>
        <position position="851"/>
    </location>
</feature>
<feature type="mutagenesis site" description="No effect on interaction with ARRB1." evidence="2 13">
    <original>R</original>
    <variation>A</variation>
    <location>
        <position position="879"/>
    </location>
</feature>
<feature type="mutagenesis site" description="Strongly reduces interaction with EPN1. Reduces interaction with SNAP91 and clathrin. No effect on EPS15 binding." evidence="2 13">
    <original>R</original>
    <variation>E</variation>
    <location>
        <position position="879"/>
    </location>
</feature>
<feature type="mutagenesis site" description="Strongly reduces interaction with SNAP91, EPN1 and clathrin. No effect on EPS15 binding. Abolishes interaction with ARRB1 and with DENND1B." evidence="2 10 11 13 19">
    <original>Y</original>
    <variation>V</variation>
    <location>
        <position position="888"/>
    </location>
</feature>
<feature type="mutagenesis site" description="Strongly reduces interaction with LDLRAP1 and ARRB1. No effect on DENND1B-binding." evidence="3 11 19">
    <original>E</original>
    <variation>A</variation>
    <location>
        <position position="902"/>
    </location>
</feature>
<feature type="mutagenesis site" description="Strongly reduces interaction with LDLRAP1. SNAP91 and clathrin. Reduces interaction with EPN1. No effect on EPS15 binding." evidence="2">
    <original>K</original>
    <variation>Q</variation>
    <location>
        <position position="917"/>
    </location>
</feature>
<feature type="strand" evidence="34">
    <location>
        <begin position="10"/>
        <end position="12"/>
    </location>
</feature>
<feature type="helix" evidence="34">
    <location>
        <begin position="13"/>
        <end position="23"/>
    </location>
</feature>
<feature type="helix" evidence="34">
    <location>
        <begin position="27"/>
        <end position="41"/>
    </location>
</feature>
<feature type="turn" evidence="34">
    <location>
        <begin position="42"/>
        <end position="44"/>
    </location>
</feature>
<feature type="helix" evidence="34">
    <location>
        <begin position="48"/>
        <end position="50"/>
    </location>
</feature>
<feature type="helix" evidence="34">
    <location>
        <begin position="51"/>
        <end position="55"/>
    </location>
</feature>
<feature type="helix" evidence="34">
    <location>
        <begin position="56"/>
        <end position="58"/>
    </location>
</feature>
<feature type="strand" evidence="32">
    <location>
        <begin position="59"/>
        <end position="61"/>
    </location>
</feature>
<feature type="helix" evidence="34">
    <location>
        <begin position="63"/>
        <end position="79"/>
    </location>
</feature>
<feature type="turn" evidence="34">
    <location>
        <begin position="81"/>
        <end position="86"/>
    </location>
</feature>
<feature type="helix" evidence="34">
    <location>
        <begin position="89"/>
        <end position="92"/>
    </location>
</feature>
<feature type="helix" evidence="34">
    <location>
        <begin position="93"/>
        <end position="95"/>
    </location>
</feature>
<feature type="helix" evidence="34">
    <location>
        <begin position="100"/>
        <end position="110"/>
    </location>
</feature>
<feature type="helix" evidence="32">
    <location>
        <begin position="116"/>
        <end position="118"/>
    </location>
</feature>
<feature type="helix" evidence="34">
    <location>
        <begin position="119"/>
        <end position="122"/>
    </location>
</feature>
<feature type="helix" evidence="34">
    <location>
        <begin position="125"/>
        <end position="129"/>
    </location>
</feature>
<feature type="helix" evidence="34">
    <location>
        <begin position="135"/>
        <end position="150"/>
    </location>
</feature>
<feature type="helix" evidence="34">
    <location>
        <begin position="157"/>
        <end position="160"/>
    </location>
</feature>
<feature type="helix" evidence="34">
    <location>
        <begin position="162"/>
        <end position="169"/>
    </location>
</feature>
<feature type="helix" evidence="34">
    <location>
        <begin position="174"/>
        <end position="188"/>
    </location>
</feature>
<feature type="turn" evidence="31">
    <location>
        <begin position="192"/>
        <end position="195"/>
    </location>
</feature>
<feature type="helix" evidence="34">
    <location>
        <begin position="200"/>
        <end position="213"/>
    </location>
</feature>
<feature type="helix" evidence="34">
    <location>
        <begin position="218"/>
        <end position="226"/>
    </location>
</feature>
<feature type="strand" evidence="34">
    <location>
        <begin position="232"/>
        <end position="235"/>
    </location>
</feature>
<feature type="helix" evidence="34">
    <location>
        <begin position="236"/>
        <end position="243"/>
    </location>
</feature>
<feature type="helix" evidence="31">
    <location>
        <begin position="245"/>
        <end position="247"/>
    </location>
</feature>
<feature type="helix" evidence="34">
    <location>
        <begin position="254"/>
        <end position="265"/>
    </location>
</feature>
<feature type="strand" evidence="31">
    <location>
        <begin position="267"/>
        <end position="270"/>
    </location>
</feature>
<feature type="turn" evidence="34">
    <location>
        <begin position="272"/>
        <end position="276"/>
    </location>
</feature>
<feature type="helix" evidence="34">
    <location>
        <begin position="277"/>
        <end position="290"/>
    </location>
</feature>
<feature type="turn" evidence="34">
    <location>
        <begin position="291"/>
        <end position="293"/>
    </location>
</feature>
<feature type="helix" evidence="34">
    <location>
        <begin position="296"/>
        <end position="312"/>
    </location>
</feature>
<feature type="turn" evidence="34">
    <location>
        <begin position="314"/>
        <end position="319"/>
    </location>
</feature>
<feature type="helix" evidence="34">
    <location>
        <begin position="321"/>
        <end position="324"/>
    </location>
</feature>
<feature type="helix" evidence="34">
    <location>
        <begin position="332"/>
        <end position="344"/>
    </location>
</feature>
<feature type="turn" evidence="34">
    <location>
        <begin position="348"/>
        <end position="350"/>
    </location>
</feature>
<feature type="helix" evidence="34">
    <location>
        <begin position="351"/>
        <end position="361"/>
    </location>
</feature>
<feature type="helix" evidence="34">
    <location>
        <begin position="367"/>
        <end position="383"/>
    </location>
</feature>
<feature type="turn" evidence="34">
    <location>
        <begin position="385"/>
        <end position="387"/>
    </location>
</feature>
<feature type="helix" evidence="34">
    <location>
        <begin position="388"/>
        <end position="400"/>
    </location>
</feature>
<feature type="helix" evidence="34">
    <location>
        <begin position="404"/>
        <end position="420"/>
    </location>
</feature>
<feature type="strand" evidence="34">
    <location>
        <begin position="423"/>
        <end position="425"/>
    </location>
</feature>
<feature type="helix" evidence="34">
    <location>
        <begin position="427"/>
        <end position="433"/>
    </location>
</feature>
<feature type="helix" evidence="34">
    <location>
        <begin position="434"/>
        <end position="438"/>
    </location>
</feature>
<feature type="helix" evidence="34">
    <location>
        <begin position="442"/>
        <end position="452"/>
    </location>
</feature>
<feature type="turn" evidence="34">
    <location>
        <begin position="456"/>
        <end position="458"/>
    </location>
</feature>
<feature type="helix" evidence="34">
    <location>
        <begin position="462"/>
        <end position="470"/>
    </location>
</feature>
<feature type="strand" evidence="34">
    <location>
        <begin position="473"/>
        <end position="476"/>
    </location>
</feature>
<feature type="helix" evidence="34">
    <location>
        <begin position="478"/>
        <end position="494"/>
    </location>
</feature>
<feature type="turn" evidence="34">
    <location>
        <begin position="496"/>
        <end position="499"/>
    </location>
</feature>
<feature type="helix" evidence="34">
    <location>
        <begin position="500"/>
        <end position="511"/>
    </location>
</feature>
<feature type="helix" evidence="34">
    <location>
        <begin position="517"/>
        <end position="530"/>
    </location>
</feature>
<feature type="helix" evidence="34">
    <location>
        <begin position="536"/>
        <end position="542"/>
    </location>
</feature>
<feature type="strand" evidence="33">
    <location>
        <begin position="552"/>
        <end position="554"/>
    </location>
</feature>
<feature type="helix" evidence="34">
    <location>
        <begin position="559"/>
        <end position="564"/>
    </location>
</feature>
<feature type="turn" evidence="34">
    <location>
        <begin position="565"/>
        <end position="568"/>
    </location>
</feature>
<feature type="helix" evidence="34">
    <location>
        <begin position="571"/>
        <end position="574"/>
    </location>
</feature>
<feature type="helix" evidence="34">
    <location>
        <begin position="578"/>
        <end position="580"/>
    </location>
</feature>
<feature type="strand" evidence="33">
    <location>
        <begin position="619"/>
        <end position="621"/>
    </location>
</feature>
<feature type="helix" evidence="33">
    <location>
        <begin position="624"/>
        <end position="630"/>
    </location>
</feature>
<feature type="strand" evidence="30">
    <location>
        <begin position="712"/>
        <end position="715"/>
    </location>
</feature>
<feature type="helix" evidence="30">
    <location>
        <begin position="717"/>
        <end position="719"/>
    </location>
</feature>
<feature type="turn" evidence="30">
    <location>
        <begin position="720"/>
        <end position="722"/>
    </location>
</feature>
<feature type="strand" evidence="30">
    <location>
        <begin position="723"/>
        <end position="732"/>
    </location>
</feature>
<feature type="strand" evidence="30">
    <location>
        <begin position="735"/>
        <end position="744"/>
    </location>
</feature>
<feature type="strand" evidence="30">
    <location>
        <begin position="746"/>
        <end position="748"/>
    </location>
</feature>
<feature type="strand" evidence="30">
    <location>
        <begin position="754"/>
        <end position="757"/>
    </location>
</feature>
<feature type="strand" evidence="30">
    <location>
        <begin position="765"/>
        <end position="768"/>
    </location>
</feature>
<feature type="strand" evidence="30">
    <location>
        <begin position="781"/>
        <end position="790"/>
    </location>
</feature>
<feature type="strand" evidence="30">
    <location>
        <begin position="802"/>
        <end position="808"/>
    </location>
</feature>
<feature type="strand" evidence="30">
    <location>
        <begin position="813"/>
        <end position="819"/>
    </location>
</feature>
<feature type="helix" evidence="30">
    <location>
        <begin position="822"/>
        <end position="825"/>
    </location>
</feature>
<feature type="helix" evidence="30">
    <location>
        <begin position="834"/>
        <end position="843"/>
    </location>
</feature>
<feature type="helix" evidence="30">
    <location>
        <begin position="846"/>
        <end position="848"/>
    </location>
</feature>
<feature type="strand" evidence="30">
    <location>
        <begin position="850"/>
        <end position="854"/>
    </location>
</feature>
<feature type="helix" evidence="30">
    <location>
        <begin position="861"/>
        <end position="870"/>
    </location>
</feature>
<feature type="strand" evidence="30">
    <location>
        <begin position="874"/>
        <end position="881"/>
    </location>
</feature>
<feature type="strand" evidence="30">
    <location>
        <begin position="884"/>
        <end position="893"/>
    </location>
</feature>
<feature type="strand" evidence="30">
    <location>
        <begin position="898"/>
        <end position="905"/>
    </location>
</feature>
<feature type="strand" evidence="30">
    <location>
        <begin position="910"/>
        <end position="920"/>
    </location>
</feature>
<feature type="helix" evidence="30">
    <location>
        <begin position="921"/>
        <end position="923"/>
    </location>
</feature>
<feature type="helix" evidence="30">
    <location>
        <begin position="924"/>
        <end position="936"/>
    </location>
</feature>